<protein>
    <recommendedName>
        <fullName evidence="37">Histone-lysine N-methyltransferase SETDB1</fullName>
        <ecNumber evidence="12">2.1.1.366</ecNumber>
    </recommendedName>
    <alternativeName>
        <fullName>ERG-associated protein with SET domain</fullName>
        <shortName evidence="35">ESET</shortName>
    </alternativeName>
    <alternativeName>
        <fullName>Histone H3-K9 methyltransferase 4</fullName>
        <shortName>H3-K9-HMTase 4</shortName>
    </alternativeName>
    <alternativeName>
        <fullName>Lysine N-methyltransferase 1E</fullName>
    </alternativeName>
    <alternativeName>
        <fullName>SET domain bifurcated 1</fullName>
    </alternativeName>
</protein>
<sequence>MSSLPGCIGLDAATATVESEEIAELQQAVVEELGISMEELRHFIDEELEKMDCVQQRKKQLAELETWVIQKESEVAHVDQLFDDASRAVTNCESLVKDFYSKLGLQYRDSSSEDESSRPTEIIEIPDEDDDVLSIDSGDAGSRTPKDQKLREAMAALRKSAQDVQKFMDAVNKKSSSQDLHKGTLSQMSGELSKDGDLIVSMRILGKKRTKTWHKGTLIAIQTVGPGKKYKVKFDNKGKSLLSGNHIAYDYHPPADKLYVGSRVVAKYKDGNQVWLYAGIVAETPNVKNKLRFLIFFDDGYASYVTQSELYPICRPLKKTWEDIEDISCRDFIEEYVTAYPNRPMVLLKSGQLIKTEWEGTWWKSRVEEVDGSLVRILFLDDKRCEWIYRGSTRLEPMFSMKTSSASALEKKQGQLRTRPNMGAVRSKGPVVQYTQDLTGTGTQFKPVEPPQPTAPPAPPFPPAPPLSPQAGDSDLESQLAQSRKQVAKKSTSFRPGSVGSGHSSPTSPALSENVSGGKPGINQTYRSPLGSTASAPAPSALPAPPAPPVFHGMLERAPAEPSYRAPMEKLFYLPHVCSYTCLSRVRPMRNEQYRGKNPLLVPLLYDFRRMTARRRVNRKMGFHVIYKTPCGLCLRTMQEIERYLFETGCDFLFLEMFCLDPYVLVDRKFQPYKPFYYILDITYGKEDVPLSCVNEIDTTPPPQVAYSKERIPGKGVFINTGPEFLVGCDCKDGCRDKSKCACHQLTIQATACTPGGQINPNSGYQYKRLEECLPTGVYECNKRCKCDPNMCTNRLVQHGLQVRLQLFKTQNKGWGIRCLDDIAKGSFVCIYAGKILTDDFADKEGLEMGDEYFANLDHIESVENFKEGYESDAPCSSDSSGVDLKDQEDGNSGTEDPEESNDDSSDDNFCKDEDFSTSSVWRSYATRRQTRGQKENGLSETTSKDSHPPDLGPPHIPVPPSIPVGGCNPPSSEETPKNKVASWLSCNSVSEGGFADSDSHSSFKTNEGGEGRAGGSRMEAEKASTSGLGIKDEGDIKQAKKEDTDDRNKMSVVTESSRNYGYNPSPVKPEGLRRPPSKTSMHQSRRLMASAQSNPDDVLTLSSSTESEGESGTSRKPTAGQTSATAVDSDDIQTISSGSEGDDFEDKKNMTGPMKRQVAVKSTRGFALKSTHGIAIKSTNMASVDKGESAPVRKNTRQFYDGEESCYIIDAKLEGNLGRYLNHSCSPNLFVQNVFVDTHDLRFPWVAFFASKRIRAGTELTWDYNYEVGSVEGKELLCCCGAIECRGRLL</sequence>
<feature type="chain" id="PRO_0000186064" description="Histone-lysine N-methyltransferase SETDB1">
    <location>
        <begin position="1"/>
        <end position="1291"/>
    </location>
</feature>
<feature type="domain" description="Tudor 1">
    <location>
        <begin position="257"/>
        <end position="320"/>
    </location>
</feature>
<feature type="domain" description="Tudor 2">
    <location>
        <begin position="347"/>
        <end position="403"/>
    </location>
</feature>
<feature type="domain" description="MBD" evidence="7">
    <location>
        <begin position="594"/>
        <end position="665"/>
    </location>
</feature>
<feature type="domain" description="Pre-SET" evidence="5">
    <location>
        <begin position="727"/>
        <end position="800"/>
    </location>
</feature>
<feature type="domain" description="SET" evidence="6">
    <location>
        <begin position="803"/>
        <end position="1266"/>
    </location>
</feature>
<feature type="domain" description="Post-SET" evidence="4">
    <location>
        <begin position="1275"/>
        <end position="1291"/>
    </location>
</feature>
<feature type="region of interest" description="Disordered" evidence="9">
    <location>
        <begin position="108"/>
        <end position="147"/>
    </location>
</feature>
<feature type="region of interest" description="Disordered" evidence="9">
    <location>
        <begin position="404"/>
        <end position="545"/>
    </location>
</feature>
<feature type="region of interest" description="Disordered" evidence="9">
    <location>
        <begin position="868"/>
        <end position="1160"/>
    </location>
</feature>
<feature type="coiled-coil region" evidence="3">
    <location>
        <begin position="18"/>
        <end position="64"/>
    </location>
</feature>
<feature type="compositionally biased region" description="Acidic residues" evidence="9">
    <location>
        <begin position="124"/>
        <end position="133"/>
    </location>
</feature>
<feature type="compositionally biased region" description="Polar residues" evidence="9">
    <location>
        <begin position="433"/>
        <end position="444"/>
    </location>
</feature>
<feature type="compositionally biased region" description="Pro residues" evidence="9">
    <location>
        <begin position="448"/>
        <end position="468"/>
    </location>
</feature>
<feature type="compositionally biased region" description="Polar residues" evidence="9">
    <location>
        <begin position="477"/>
        <end position="515"/>
    </location>
</feature>
<feature type="compositionally biased region" description="Low complexity" evidence="9">
    <location>
        <begin position="528"/>
        <end position="539"/>
    </location>
</feature>
<feature type="compositionally biased region" description="Acidic residues" evidence="9">
    <location>
        <begin position="896"/>
        <end position="907"/>
    </location>
</feature>
<feature type="compositionally biased region" description="Pro residues" evidence="9">
    <location>
        <begin position="951"/>
        <end position="963"/>
    </location>
</feature>
<feature type="compositionally biased region" description="Basic and acidic residues" evidence="9">
    <location>
        <begin position="1031"/>
        <end position="1050"/>
    </location>
</feature>
<feature type="compositionally biased region" description="Polar residues" evidence="9">
    <location>
        <begin position="1052"/>
        <end position="1063"/>
    </location>
</feature>
<feature type="compositionally biased region" description="Low complexity" evidence="9">
    <location>
        <begin position="1100"/>
        <end position="1115"/>
    </location>
</feature>
<feature type="compositionally biased region" description="Polar residues" evidence="9">
    <location>
        <begin position="1116"/>
        <end position="1140"/>
    </location>
</feature>
<feature type="binding site" evidence="1">
    <location>
        <position position="729"/>
    </location>
    <ligand>
        <name>Zn(2+)</name>
        <dbReference type="ChEBI" id="CHEBI:29105"/>
        <label>1</label>
    </ligand>
</feature>
<feature type="binding site" evidence="1">
    <location>
        <position position="729"/>
    </location>
    <ligand>
        <name>Zn(2+)</name>
        <dbReference type="ChEBI" id="CHEBI:29105"/>
        <label>2</label>
    </ligand>
</feature>
<feature type="binding site" evidence="1">
    <location>
        <position position="731"/>
    </location>
    <ligand>
        <name>Zn(2+)</name>
        <dbReference type="ChEBI" id="CHEBI:29105"/>
        <label>1</label>
    </ligand>
</feature>
<feature type="binding site" evidence="1">
    <location>
        <position position="735"/>
    </location>
    <ligand>
        <name>Zn(2+)</name>
        <dbReference type="ChEBI" id="CHEBI:29105"/>
        <label>1</label>
    </ligand>
</feature>
<feature type="binding site" evidence="1">
    <location>
        <position position="735"/>
    </location>
    <ligand>
        <name>Zn(2+)</name>
        <dbReference type="ChEBI" id="CHEBI:29105"/>
        <label>3</label>
    </ligand>
</feature>
<feature type="binding site" evidence="1">
    <location>
        <position position="741"/>
    </location>
    <ligand>
        <name>Zn(2+)</name>
        <dbReference type="ChEBI" id="CHEBI:29105"/>
        <label>1</label>
    </ligand>
</feature>
<feature type="binding site" evidence="1">
    <location>
        <position position="743"/>
    </location>
    <ligand>
        <name>Zn(2+)</name>
        <dbReference type="ChEBI" id="CHEBI:29105"/>
        <label>2</label>
    </ligand>
</feature>
<feature type="binding site" evidence="1">
    <location>
        <position position="781"/>
    </location>
    <ligand>
        <name>Zn(2+)</name>
        <dbReference type="ChEBI" id="CHEBI:29105"/>
        <label>2</label>
    </ligand>
</feature>
<feature type="binding site" evidence="1">
    <location>
        <position position="781"/>
    </location>
    <ligand>
        <name>Zn(2+)</name>
        <dbReference type="ChEBI" id="CHEBI:29105"/>
        <label>3</label>
    </ligand>
</feature>
<feature type="binding site" evidence="1">
    <location>
        <position position="785"/>
    </location>
    <ligand>
        <name>Zn(2+)</name>
        <dbReference type="ChEBI" id="CHEBI:29105"/>
        <label>2</label>
    </ligand>
</feature>
<feature type="binding site" evidence="1">
    <location>
        <position position="787"/>
    </location>
    <ligand>
        <name>Zn(2+)</name>
        <dbReference type="ChEBI" id="CHEBI:29105"/>
        <label>3</label>
    </ligand>
</feature>
<feature type="binding site" evidence="1">
    <location>
        <position position="792"/>
    </location>
    <ligand>
        <name>Zn(2+)</name>
        <dbReference type="ChEBI" id="CHEBI:29105"/>
        <label>3</label>
    </ligand>
</feature>
<feature type="binding site" evidence="1">
    <location>
        <begin position="813"/>
        <end position="815"/>
    </location>
    <ligand>
        <name>S-adenosyl-L-methionine</name>
        <dbReference type="ChEBI" id="CHEBI:59789"/>
    </ligand>
</feature>
<feature type="binding site" evidence="6">
    <location>
        <position position="851"/>
    </location>
    <ligand>
        <name>S-adenosyl-L-methionine</name>
        <dbReference type="ChEBI" id="CHEBI:59789"/>
    </ligand>
</feature>
<feature type="binding site" evidence="6">
    <location>
        <position position="853"/>
    </location>
    <ligand>
        <name>S-adenosyl-L-methionine</name>
        <dbReference type="ChEBI" id="CHEBI:59789"/>
    </ligand>
</feature>
<feature type="binding site" evidence="6">
    <location>
        <position position="1220"/>
    </location>
    <ligand>
        <name>S-adenosyl-L-methionine</name>
        <dbReference type="ChEBI" id="CHEBI:59789"/>
    </ligand>
</feature>
<feature type="binding site" evidence="1">
    <location>
        <begin position="1223"/>
        <end position="1224"/>
    </location>
    <ligand>
        <name>S-adenosyl-L-methionine</name>
        <dbReference type="ChEBI" id="CHEBI:59789"/>
    </ligand>
</feature>
<feature type="binding site" evidence="1">
    <location>
        <position position="1226"/>
    </location>
    <ligand>
        <name>Zn(2+)</name>
        <dbReference type="ChEBI" id="CHEBI:29105"/>
        <label>4</label>
    </ligand>
</feature>
<feature type="binding site" evidence="1">
    <location>
        <position position="1279"/>
    </location>
    <ligand>
        <name>Zn(2+)</name>
        <dbReference type="ChEBI" id="CHEBI:29105"/>
        <label>4</label>
    </ligand>
</feature>
<feature type="binding site" evidence="1">
    <location>
        <position position="1281"/>
    </location>
    <ligand>
        <name>Zn(2+)</name>
        <dbReference type="ChEBI" id="CHEBI:29105"/>
        <label>4</label>
    </ligand>
</feature>
<feature type="binding site" evidence="1">
    <location>
        <position position="1286"/>
    </location>
    <ligand>
        <name>Zn(2+)</name>
        <dbReference type="ChEBI" id="CHEBI:29105"/>
        <label>4</label>
    </ligand>
</feature>
<feature type="modified residue" description="Phosphoserine" evidence="2">
    <location>
        <position position="112"/>
    </location>
</feature>
<feature type="modified residue" description="Phosphoserine" evidence="2">
    <location>
        <position position="117"/>
    </location>
</feature>
<feature type="modified residue" description="Phosphothreonine" evidence="2">
    <location>
        <position position="120"/>
    </location>
</feature>
<feature type="modified residue" description="Phosphoserine" evidence="42">
    <location>
        <position position="1025"/>
    </location>
</feature>
<feature type="modified residue" description="Phosphoserine" evidence="39 40 41 42">
    <location>
        <position position="1066"/>
    </location>
</feature>
<feature type="modified residue" description="N6,N6,N6-trimethyllysine; alternate" evidence="43">
    <location>
        <position position="1170"/>
    </location>
</feature>
<feature type="modified residue" description="N6,N6-dimethyllysine; alternate" evidence="43">
    <location>
        <position position="1170"/>
    </location>
</feature>
<feature type="modified residue" description="N6,N6,N6-trimethyllysine; alternate" evidence="43">
    <location>
        <position position="1178"/>
    </location>
</feature>
<feature type="modified residue" description="N6,N6-dimethyllysine; alternate" evidence="43">
    <location>
        <position position="1178"/>
    </location>
</feature>
<feature type="cross-link" description="Glycyl lysine isopeptide (Lys-Gly) (interchain with G-Cter in SUMO2); alternate" evidence="48">
    <location>
        <position position="182"/>
    </location>
</feature>
<feature type="cross-link" description="Glycyl lysine isopeptide (Lys-Gly) (interchain with G-Cter in ubiquitin); alternate">
    <location>
        <position position="182"/>
    </location>
</feature>
<feature type="cross-link" description="Glycyl lysine isopeptide (Lys-Gly) (interchain with G-Cter in ubiquitin)" evidence="27">
    <location>
        <position position="867"/>
    </location>
</feature>
<feature type="cross-link" description="Glycyl lysine isopeptide (Lys-Gly) (interchain with G-Cter in SUMO1); alternate" evidence="44">
    <location>
        <position position="1032"/>
    </location>
</feature>
<feature type="cross-link" description="Glycyl lysine isopeptide (Lys-Gly) (interchain with G-Cter in SUMO2); alternate" evidence="45 46 47 48">
    <location>
        <position position="1032"/>
    </location>
</feature>
<feature type="cross-link" description="Glycyl lysine isopeptide (Lys-Gly) (interchain with G-Cter in SUMO2)" evidence="48">
    <location>
        <position position="1038"/>
    </location>
</feature>
<feature type="cross-link" description="Glycyl lysine isopeptide (Lys-Gly) (interchain with G-Cter in SUMO2)" evidence="45 46 47 48">
    <location>
        <position position="1069"/>
    </location>
</feature>
<feature type="cross-link" description="Glycyl lysine isopeptide (Lys-Gly) (interchain with G-Cter in SUMO2)" evidence="48">
    <location>
        <position position="1149"/>
    </location>
</feature>
<feature type="splice variant" id="VSP_002217" description="In isoform 2." evidence="36">
    <original>DDKRCEWIYRGSTRLEP</original>
    <variation>VLFFSTILEAEVGGGGT</variation>
    <location>
        <begin position="381"/>
        <end position="397"/>
    </location>
</feature>
<feature type="splice variant" id="VSP_002218" description="In isoform 2." evidence="36">
    <location>
        <begin position="398"/>
        <end position="1291"/>
    </location>
</feature>
<feature type="splice variant" id="VSP_034600" description="In isoform 3." evidence="36">
    <location>
        <position position="1254"/>
    </location>
</feature>
<feature type="sequence variant" id="VAR_014284" description="In dbSNP:rs2271075.">
    <original>N</original>
    <variation>S</variation>
    <location>
        <position position="236"/>
    </location>
</feature>
<feature type="sequence variant" id="VAR_031281" description="In dbSNP:rs17852587." evidence="14">
    <original>P</original>
    <variation>S</variation>
    <location>
        <position position="506"/>
    </location>
</feature>
<feature type="sequence variant" id="VAR_014286" description="In dbSNP:rs2691551.">
    <original>A</original>
    <variation>G</variation>
    <location>
        <position position="824"/>
    </location>
</feature>
<feature type="sequence variant" id="VAR_014285" description="In dbSNP:rs2814054.">
    <original>A</original>
    <variation>P</variation>
    <location>
        <position position="824"/>
    </location>
</feature>
<feature type="mutagenesis site" description="Abolishes methyltransferase activity." evidence="10">
    <original>CDC</original>
    <variation>LDP</variation>
    <location>
        <begin position="729"/>
        <end position="731"/>
    </location>
</feature>
<feature type="mutagenesis site" description="No effect on K-867 ubiquitination." evidence="27">
    <original>F</original>
    <variation>K</variation>
    <location>
        <position position="866"/>
    </location>
</feature>
<feature type="mutagenesis site" description="Not monoubiquitinated by UBE2E. Loss of methyltransferase activity." evidence="27 34">
    <original>K</original>
    <variation>R</variation>
    <location>
        <position position="867"/>
    </location>
</feature>
<feature type="mutagenesis site" description="No effect on K-867 ubiquitination." evidence="27">
    <original>E</original>
    <variation>K</variation>
    <location>
        <position position="868"/>
    </location>
</feature>
<feature type="mutagenesis site" description="Abolishes methyltransferase activity." evidence="10">
    <original>H</original>
    <variation>K</variation>
    <location>
        <position position="1224"/>
    </location>
</feature>
<feature type="mutagenesis site" description="Abolishes methyltransferase activity." evidence="10 34">
    <original>C</original>
    <variation>A</variation>
    <location>
        <position position="1226"/>
    </location>
</feature>
<feature type="mutagenesis site" description="Abolishes methyltransferase activity." evidence="10">
    <original>C</original>
    <variation>Y</variation>
    <location>
        <position position="1279"/>
    </location>
</feature>
<feature type="strand" evidence="50">
    <location>
        <begin position="191"/>
        <end position="195"/>
    </location>
</feature>
<feature type="strand" evidence="50">
    <location>
        <begin position="203"/>
        <end position="207"/>
    </location>
</feature>
<feature type="strand" evidence="50">
    <location>
        <begin position="213"/>
        <end position="224"/>
    </location>
</feature>
<feature type="strand" evidence="50">
    <location>
        <begin position="227"/>
        <end position="237"/>
    </location>
</feature>
<feature type="strand" evidence="50">
    <location>
        <begin position="239"/>
        <end position="242"/>
    </location>
</feature>
<feature type="helix" evidence="50">
    <location>
        <begin position="244"/>
        <end position="246"/>
    </location>
</feature>
<feature type="strand" evidence="50">
    <location>
        <begin position="247"/>
        <end position="251"/>
    </location>
</feature>
<feature type="helix" evidence="51">
    <location>
        <begin position="255"/>
        <end position="257"/>
    </location>
</feature>
<feature type="strand" evidence="50">
    <location>
        <begin position="263"/>
        <end position="269"/>
    </location>
</feature>
<feature type="strand" evidence="50">
    <location>
        <begin position="274"/>
        <end position="283"/>
    </location>
</feature>
<feature type="turn" evidence="50">
    <location>
        <begin position="287"/>
        <end position="290"/>
    </location>
</feature>
<feature type="strand" evidence="50">
    <location>
        <begin position="293"/>
        <end position="297"/>
    </location>
</feature>
<feature type="strand" evidence="50">
    <location>
        <begin position="302"/>
        <end position="305"/>
    </location>
</feature>
<feature type="helix" evidence="50">
    <location>
        <begin position="307"/>
        <end position="309"/>
    </location>
</feature>
<feature type="strand" evidence="50">
    <location>
        <begin position="310"/>
        <end position="315"/>
    </location>
</feature>
<feature type="helix" evidence="50">
    <location>
        <begin position="320"/>
        <end position="323"/>
    </location>
</feature>
<feature type="helix" evidence="50">
    <location>
        <begin position="327"/>
        <end position="339"/>
    </location>
</feature>
<feature type="strand" evidence="50">
    <location>
        <begin position="353"/>
        <end position="358"/>
    </location>
</feature>
<feature type="strand" evidence="50">
    <location>
        <begin position="361"/>
        <end position="371"/>
    </location>
</feature>
<feature type="strand" evidence="50">
    <location>
        <begin position="374"/>
        <end position="379"/>
    </location>
</feature>
<feature type="turn" evidence="50">
    <location>
        <begin position="380"/>
        <end position="383"/>
    </location>
</feature>
<feature type="strand" evidence="50">
    <location>
        <begin position="384"/>
        <end position="389"/>
    </location>
</feature>
<feature type="helix" evidence="50">
    <location>
        <begin position="396"/>
        <end position="403"/>
    </location>
</feature>
<feature type="strand" evidence="49">
    <location>
        <begin position="1167"/>
        <end position="1172"/>
    </location>
</feature>
<organism>
    <name type="scientific">Homo sapiens</name>
    <name type="common">Human</name>
    <dbReference type="NCBI Taxonomy" id="9606"/>
    <lineage>
        <taxon>Eukaryota</taxon>
        <taxon>Metazoa</taxon>
        <taxon>Chordata</taxon>
        <taxon>Craniata</taxon>
        <taxon>Vertebrata</taxon>
        <taxon>Euteleostomi</taxon>
        <taxon>Mammalia</taxon>
        <taxon>Eutheria</taxon>
        <taxon>Euarchontoglires</taxon>
        <taxon>Primates</taxon>
        <taxon>Haplorrhini</taxon>
        <taxon>Catarrhini</taxon>
        <taxon>Hominidae</taxon>
        <taxon>Homo</taxon>
    </lineage>
</organism>
<evidence type="ECO:0000250" key="1"/>
<evidence type="ECO:0000250" key="2">
    <source>
        <dbReference type="UniProtKB" id="O88974"/>
    </source>
</evidence>
<evidence type="ECO:0000255" key="3"/>
<evidence type="ECO:0000255" key="4">
    <source>
        <dbReference type="PROSITE-ProRule" id="PRU00155"/>
    </source>
</evidence>
<evidence type="ECO:0000255" key="5">
    <source>
        <dbReference type="PROSITE-ProRule" id="PRU00157"/>
    </source>
</evidence>
<evidence type="ECO:0000255" key="6">
    <source>
        <dbReference type="PROSITE-ProRule" id="PRU00190"/>
    </source>
</evidence>
<evidence type="ECO:0000255" key="7">
    <source>
        <dbReference type="PROSITE-ProRule" id="PRU00338"/>
    </source>
</evidence>
<evidence type="ECO:0000255" key="8">
    <source>
        <dbReference type="PROSITE-ProRule" id="PRU00906"/>
    </source>
</evidence>
<evidence type="ECO:0000256" key="9">
    <source>
        <dbReference type="SAM" id="MobiDB-lite"/>
    </source>
</evidence>
<evidence type="ECO:0000269" key="10">
    <source>
    </source>
</evidence>
<evidence type="ECO:0000269" key="11">
    <source>
    </source>
</evidence>
<evidence type="ECO:0000269" key="12">
    <source>
    </source>
</evidence>
<evidence type="ECO:0000269" key="13">
    <source>
    </source>
</evidence>
<evidence type="ECO:0000269" key="14">
    <source>
    </source>
</evidence>
<evidence type="ECO:0000269" key="15">
    <source>
    </source>
</evidence>
<evidence type="ECO:0000269" key="16">
    <source>
    </source>
</evidence>
<evidence type="ECO:0000269" key="17">
    <source>
    </source>
</evidence>
<evidence type="ECO:0000269" key="18">
    <source>
    </source>
</evidence>
<evidence type="ECO:0000269" key="19">
    <source>
    </source>
</evidence>
<evidence type="ECO:0000269" key="20">
    <source>
    </source>
</evidence>
<evidence type="ECO:0000269" key="21">
    <source>
    </source>
</evidence>
<evidence type="ECO:0000269" key="22">
    <source>
    </source>
</evidence>
<evidence type="ECO:0000269" key="23">
    <source>
    </source>
</evidence>
<evidence type="ECO:0000269" key="24">
    <source>
    </source>
</evidence>
<evidence type="ECO:0000269" key="25">
    <source>
    </source>
</evidence>
<evidence type="ECO:0000269" key="26">
    <source>
    </source>
</evidence>
<evidence type="ECO:0000269" key="27">
    <source>
    </source>
</evidence>
<evidence type="ECO:0000269" key="28">
    <source>
    </source>
</evidence>
<evidence type="ECO:0000269" key="29">
    <source>
    </source>
</evidence>
<evidence type="ECO:0000269" key="30">
    <source>
    </source>
</evidence>
<evidence type="ECO:0000269" key="31">
    <source>
    </source>
</evidence>
<evidence type="ECO:0000269" key="32">
    <source>
    </source>
</evidence>
<evidence type="ECO:0000269" key="33">
    <source>
    </source>
</evidence>
<evidence type="ECO:0000269" key="34">
    <source>
    </source>
</evidence>
<evidence type="ECO:0000303" key="35">
    <source>
    </source>
</evidence>
<evidence type="ECO:0000303" key="36">
    <source>
    </source>
</evidence>
<evidence type="ECO:0000305" key="37"/>
<evidence type="ECO:0000312" key="38">
    <source>
        <dbReference type="HGNC" id="HGNC:10761"/>
    </source>
</evidence>
<evidence type="ECO:0007744" key="39">
    <source>
    </source>
</evidence>
<evidence type="ECO:0007744" key="40">
    <source>
    </source>
</evidence>
<evidence type="ECO:0007744" key="41">
    <source>
    </source>
</evidence>
<evidence type="ECO:0007744" key="42">
    <source>
    </source>
</evidence>
<evidence type="ECO:0007744" key="43">
    <source>
    </source>
</evidence>
<evidence type="ECO:0007744" key="44">
    <source>
    </source>
</evidence>
<evidence type="ECO:0007744" key="45">
    <source>
    </source>
</evidence>
<evidence type="ECO:0007744" key="46">
    <source>
    </source>
</evidence>
<evidence type="ECO:0007744" key="47">
    <source>
    </source>
</evidence>
<evidence type="ECO:0007744" key="48">
    <source>
    </source>
</evidence>
<evidence type="ECO:0007829" key="49">
    <source>
        <dbReference type="PDB" id="4X3S"/>
    </source>
</evidence>
<evidence type="ECO:0007829" key="50">
    <source>
        <dbReference type="PDB" id="6BHD"/>
    </source>
</evidence>
<evidence type="ECO:0007829" key="51">
    <source>
        <dbReference type="PDB" id="6BHE"/>
    </source>
</evidence>
<accession>Q15047</accession>
<accession>A6NEW2</accession>
<accession>Q5SZD8</accession>
<accession>Q5SZD9</accession>
<accession>Q5SZE0</accession>
<accession>Q5SZE7</accession>
<accession>Q96GM9</accession>
<keyword id="KW-0002">3D-structure</keyword>
<keyword id="KW-0025">Alternative splicing</keyword>
<keyword id="KW-0156">Chromatin regulator</keyword>
<keyword id="KW-0158">Chromosome</keyword>
<keyword id="KW-0175">Coiled coil</keyword>
<keyword id="KW-0963">Cytoplasm</keyword>
<keyword id="KW-1017">Isopeptide bond</keyword>
<keyword id="KW-0479">Metal-binding</keyword>
<keyword id="KW-0488">Methylation</keyword>
<keyword id="KW-0489">Methyltransferase</keyword>
<keyword id="KW-0539">Nucleus</keyword>
<keyword id="KW-0597">Phosphoprotein</keyword>
<keyword id="KW-1267">Proteomics identification</keyword>
<keyword id="KW-1185">Reference proteome</keyword>
<keyword id="KW-0677">Repeat</keyword>
<keyword id="KW-0678">Repressor</keyword>
<keyword id="KW-0949">S-adenosyl-L-methionine</keyword>
<keyword id="KW-0804">Transcription</keyword>
<keyword id="KW-0805">Transcription regulation</keyword>
<keyword id="KW-0808">Transferase</keyword>
<keyword id="KW-0832">Ubl conjugation</keyword>
<keyword id="KW-0862">Zinc</keyword>
<dbReference type="EC" id="2.1.1.366" evidence="12"/>
<dbReference type="EMBL" id="D31891">
    <property type="protein sequence ID" value="BAA06689.2"/>
    <property type="status" value="ALT_INIT"/>
    <property type="molecule type" value="mRNA"/>
</dbReference>
<dbReference type="EMBL" id="AL590133">
    <property type="status" value="NOT_ANNOTATED_CDS"/>
    <property type="molecule type" value="Genomic_DNA"/>
</dbReference>
<dbReference type="EMBL" id="CH471121">
    <property type="protein sequence ID" value="EAW53506.1"/>
    <property type="molecule type" value="Genomic_DNA"/>
</dbReference>
<dbReference type="EMBL" id="BC009362">
    <property type="protein sequence ID" value="AAH09362.1"/>
    <property type="molecule type" value="mRNA"/>
</dbReference>
<dbReference type="EMBL" id="BC028671">
    <property type="protein sequence ID" value="AAH28671.1"/>
    <property type="molecule type" value="mRNA"/>
</dbReference>
<dbReference type="CCDS" id="CCDS44217.1">
    <molecule id="Q15047-1"/>
</dbReference>
<dbReference type="CCDS" id="CCDS58026.1">
    <molecule id="Q15047-2"/>
</dbReference>
<dbReference type="CCDS" id="CCDS972.1">
    <molecule id="Q15047-3"/>
</dbReference>
<dbReference type="RefSeq" id="NP_001138887.1">
    <molecule id="Q15047-1"/>
    <property type="nucleotide sequence ID" value="NM_001145415.2"/>
</dbReference>
<dbReference type="RefSeq" id="NP_001230420.1">
    <molecule id="Q15047-2"/>
    <property type="nucleotide sequence ID" value="NM_001243491.2"/>
</dbReference>
<dbReference type="RefSeq" id="NP_001380889.1">
    <molecule id="Q15047-1"/>
    <property type="nucleotide sequence ID" value="NM_001393960.1"/>
</dbReference>
<dbReference type="RefSeq" id="NP_001380893.1">
    <molecule id="Q15047-2"/>
    <property type="nucleotide sequence ID" value="NM_001393964.1"/>
</dbReference>
<dbReference type="RefSeq" id="NP_001380894.1">
    <molecule id="Q15047-2"/>
    <property type="nucleotide sequence ID" value="NM_001393965.1"/>
</dbReference>
<dbReference type="RefSeq" id="NP_001380895.1">
    <molecule id="Q15047-2"/>
    <property type="nucleotide sequence ID" value="NM_001393966.1"/>
</dbReference>
<dbReference type="RefSeq" id="NP_036564.3">
    <molecule id="Q15047-3"/>
    <property type="nucleotide sequence ID" value="NM_012432.3"/>
</dbReference>
<dbReference type="RefSeq" id="XP_016858444.1">
    <property type="nucleotide sequence ID" value="XM_017002955.1"/>
</dbReference>
<dbReference type="RefSeq" id="XP_047291529.1">
    <molecule id="Q15047-1"/>
    <property type="nucleotide sequence ID" value="XM_047435573.1"/>
</dbReference>
<dbReference type="RefSeq" id="XP_047291535.1">
    <molecule id="Q15047-1"/>
    <property type="nucleotide sequence ID" value="XM_047435579.1"/>
</dbReference>
<dbReference type="RefSeq" id="XP_047291538.1">
    <molecule id="Q15047-1"/>
    <property type="nucleotide sequence ID" value="XM_047435582.1"/>
</dbReference>
<dbReference type="RefSeq" id="XP_054195851.1">
    <molecule id="Q15047-1"/>
    <property type="nucleotide sequence ID" value="XM_054339876.1"/>
</dbReference>
<dbReference type="RefSeq" id="XP_054195852.1">
    <molecule id="Q15047-1"/>
    <property type="nucleotide sequence ID" value="XM_054339877.1"/>
</dbReference>
<dbReference type="RefSeq" id="XP_054195853.1">
    <molecule id="Q15047-1"/>
    <property type="nucleotide sequence ID" value="XM_054339878.1"/>
</dbReference>
<dbReference type="PDB" id="3DLM">
    <property type="method" value="X-ray"/>
    <property type="resolution" value="1.77 A"/>
    <property type="chains" value="A=196-402"/>
</dbReference>
<dbReference type="PDB" id="4X3S">
    <property type="method" value="X-ray"/>
    <property type="resolution" value="1.60 A"/>
    <property type="chains" value="C/D=1165-1174"/>
</dbReference>
<dbReference type="PDB" id="5KCH">
    <property type="method" value="X-ray"/>
    <property type="resolution" value="1.70 A"/>
    <property type="chains" value="A=196-403"/>
</dbReference>
<dbReference type="PDB" id="5KCO">
    <property type="method" value="X-ray"/>
    <property type="resolution" value="1.47 A"/>
    <property type="chains" value="A=196-403"/>
</dbReference>
<dbReference type="PDB" id="5KE2">
    <property type="method" value="X-ray"/>
    <property type="resolution" value="1.56 A"/>
    <property type="chains" value="A=196-402"/>
</dbReference>
<dbReference type="PDB" id="5KE3">
    <property type="method" value="X-ray"/>
    <property type="resolution" value="1.70 A"/>
    <property type="chains" value="A=196-402"/>
</dbReference>
<dbReference type="PDB" id="5KH6">
    <property type="method" value="X-ray"/>
    <property type="resolution" value="2.05 A"/>
    <property type="chains" value="A=196-400"/>
</dbReference>
<dbReference type="PDB" id="5QT1">
    <property type="method" value="X-ray"/>
    <property type="resolution" value="1.58 A"/>
    <property type="chains" value="A=196-397"/>
</dbReference>
<dbReference type="PDB" id="5QT2">
    <property type="method" value="X-ray"/>
    <property type="resolution" value="1.59 A"/>
    <property type="chains" value="A=196-397"/>
</dbReference>
<dbReference type="PDB" id="6AU2">
    <property type="method" value="X-ray"/>
    <property type="resolution" value="1.63 A"/>
    <property type="chains" value="A=196-402"/>
</dbReference>
<dbReference type="PDB" id="6AU3">
    <property type="method" value="X-ray"/>
    <property type="resolution" value="1.80 A"/>
    <property type="chains" value="A=196-402"/>
</dbReference>
<dbReference type="PDB" id="6BHD">
    <property type="method" value="X-ray"/>
    <property type="resolution" value="1.25 A"/>
    <property type="chains" value="A=190-410"/>
</dbReference>
<dbReference type="PDB" id="6BHE">
    <property type="method" value="X-ray"/>
    <property type="resolution" value="1.35 A"/>
    <property type="chains" value="A=190-410"/>
</dbReference>
<dbReference type="PDB" id="6BHG">
    <property type="method" value="X-ray"/>
    <property type="resolution" value="1.45 A"/>
    <property type="chains" value="A=190-410"/>
</dbReference>
<dbReference type="PDB" id="6BHH">
    <property type="method" value="X-ray"/>
    <property type="resolution" value="1.85 A"/>
    <property type="chains" value="A=190-410"/>
</dbReference>
<dbReference type="PDB" id="6BHI">
    <property type="method" value="X-ray"/>
    <property type="resolution" value="1.40 A"/>
    <property type="chains" value="A=190-410"/>
</dbReference>
<dbReference type="PDB" id="6BPI">
    <property type="method" value="X-ray"/>
    <property type="resolution" value="1.64 A"/>
    <property type="chains" value="A=196-402"/>
</dbReference>
<dbReference type="PDB" id="7C9N">
    <property type="method" value="X-ray"/>
    <property type="resolution" value="2.47 A"/>
    <property type="chains" value="A/B=190-410"/>
</dbReference>
<dbReference type="PDB" id="7CAJ">
    <property type="method" value="X-ray"/>
    <property type="resolution" value="2.20 A"/>
    <property type="chains" value="A/D=190-410"/>
</dbReference>
<dbReference type="PDB" id="7CD9">
    <property type="method" value="X-ray"/>
    <property type="resolution" value="1.60 A"/>
    <property type="chains" value="A/B=190-410"/>
</dbReference>
<dbReference type="PDB" id="7CJT">
    <property type="method" value="X-ray"/>
    <property type="resolution" value="2.47 A"/>
    <property type="chains" value="A/B/C/D=190-410"/>
</dbReference>
<dbReference type="PDB" id="8G5E">
    <property type="method" value="X-ray"/>
    <property type="resolution" value="1.98 A"/>
    <property type="chains" value="A=196-403"/>
</dbReference>
<dbReference type="PDB" id="8IYA">
    <property type="method" value="X-ray"/>
    <property type="resolution" value="2.43 A"/>
    <property type="chains" value="D/E/F=867-872"/>
</dbReference>
<dbReference type="PDB" id="8UWP">
    <property type="method" value="X-ray"/>
    <property type="resolution" value="1.77 A"/>
    <property type="chains" value="A/B=196-403"/>
</dbReference>
<dbReference type="PDB" id="9CUW">
    <property type="method" value="X-ray"/>
    <property type="resolution" value="1.53 A"/>
    <property type="chains" value="A=196-403"/>
</dbReference>
<dbReference type="PDB" id="9CUX">
    <property type="method" value="X-ray"/>
    <property type="resolution" value="1.27 A"/>
    <property type="chains" value="A=196-403"/>
</dbReference>
<dbReference type="PDBsum" id="3DLM"/>
<dbReference type="PDBsum" id="4X3S"/>
<dbReference type="PDBsum" id="5KCH"/>
<dbReference type="PDBsum" id="5KCO"/>
<dbReference type="PDBsum" id="5KE2"/>
<dbReference type="PDBsum" id="5KE3"/>
<dbReference type="PDBsum" id="5KH6"/>
<dbReference type="PDBsum" id="5QT1"/>
<dbReference type="PDBsum" id="5QT2"/>
<dbReference type="PDBsum" id="6AU2"/>
<dbReference type="PDBsum" id="6AU3"/>
<dbReference type="PDBsum" id="6BHD"/>
<dbReference type="PDBsum" id="6BHE"/>
<dbReference type="PDBsum" id="6BHG"/>
<dbReference type="PDBsum" id="6BHH"/>
<dbReference type="PDBsum" id="6BHI"/>
<dbReference type="PDBsum" id="6BPI"/>
<dbReference type="PDBsum" id="7C9N"/>
<dbReference type="PDBsum" id="7CAJ"/>
<dbReference type="PDBsum" id="7CD9"/>
<dbReference type="PDBsum" id="7CJT"/>
<dbReference type="PDBsum" id="8G5E"/>
<dbReference type="PDBsum" id="8IYA"/>
<dbReference type="PDBsum" id="8UWP"/>
<dbReference type="PDBsum" id="9CUW"/>
<dbReference type="PDBsum" id="9CUX"/>
<dbReference type="SMR" id="Q15047"/>
<dbReference type="BioGRID" id="115202">
    <property type="interactions" value="207"/>
</dbReference>
<dbReference type="CORUM" id="Q15047"/>
<dbReference type="DIP" id="DIP-31029N"/>
<dbReference type="FunCoup" id="Q15047">
    <property type="interactions" value="4538"/>
</dbReference>
<dbReference type="IntAct" id="Q15047">
    <property type="interactions" value="279"/>
</dbReference>
<dbReference type="MINT" id="Q15047"/>
<dbReference type="STRING" id="9606.ENSP00000271640"/>
<dbReference type="BindingDB" id="Q15047"/>
<dbReference type="ChEMBL" id="CHEMBL2321646"/>
<dbReference type="GlyGen" id="Q15047">
    <property type="glycosylation" value="3 sites, 1 N-linked glycan (1 site), 1 O-linked glycan (1 site)"/>
</dbReference>
<dbReference type="iPTMnet" id="Q15047"/>
<dbReference type="PhosphoSitePlus" id="Q15047"/>
<dbReference type="BioMuta" id="SETDB1"/>
<dbReference type="DMDM" id="25091210"/>
<dbReference type="jPOST" id="Q15047"/>
<dbReference type="MassIVE" id="Q15047"/>
<dbReference type="PaxDb" id="9606-ENSP00000271640"/>
<dbReference type="PeptideAtlas" id="Q15047"/>
<dbReference type="ProteomicsDB" id="60397">
    <molecule id="Q15047-1"/>
</dbReference>
<dbReference type="ProteomicsDB" id="60398">
    <molecule id="Q15047-2"/>
</dbReference>
<dbReference type="ProteomicsDB" id="60399">
    <molecule id="Q15047-3"/>
</dbReference>
<dbReference type="Pumba" id="Q15047"/>
<dbReference type="Antibodypedia" id="20300">
    <property type="antibodies" value="405 antibodies from 41 providers"/>
</dbReference>
<dbReference type="DNASU" id="9869"/>
<dbReference type="Ensembl" id="ENST00000271640.9">
    <molecule id="Q15047-1"/>
    <property type="protein sequence ID" value="ENSP00000271640.5"/>
    <property type="gene ID" value="ENSG00000143379.13"/>
</dbReference>
<dbReference type="Ensembl" id="ENST00000368962.6">
    <molecule id="Q15047-2"/>
    <property type="protein sequence ID" value="ENSP00000357958.2"/>
    <property type="gene ID" value="ENSG00000143379.13"/>
</dbReference>
<dbReference type="Ensembl" id="ENST00000368969.8">
    <molecule id="Q15047-3"/>
    <property type="protein sequence ID" value="ENSP00000357965.4"/>
    <property type="gene ID" value="ENSG00000143379.13"/>
</dbReference>
<dbReference type="GeneID" id="9869"/>
<dbReference type="KEGG" id="hsa:9869"/>
<dbReference type="UCSC" id="uc001evu.3">
    <molecule id="Q15047-1"/>
    <property type="organism name" value="human"/>
</dbReference>
<dbReference type="AGR" id="HGNC:10761"/>
<dbReference type="CTD" id="9869"/>
<dbReference type="DisGeNET" id="9869"/>
<dbReference type="GeneCards" id="SETDB1"/>
<dbReference type="HGNC" id="HGNC:10761">
    <property type="gene designation" value="SETDB1"/>
</dbReference>
<dbReference type="HPA" id="ENSG00000143379">
    <property type="expression patterns" value="Low tissue specificity"/>
</dbReference>
<dbReference type="MIM" id="604396">
    <property type="type" value="gene"/>
</dbReference>
<dbReference type="neXtProt" id="NX_Q15047"/>
<dbReference type="OpenTargets" id="ENSG00000143379"/>
<dbReference type="PharmGKB" id="PA35679"/>
<dbReference type="VEuPathDB" id="HostDB:ENSG00000143379"/>
<dbReference type="eggNOG" id="KOG1141">
    <property type="taxonomic scope" value="Eukaryota"/>
</dbReference>
<dbReference type="GeneTree" id="ENSGT00940000157471"/>
<dbReference type="HOGENOM" id="CLU_003279_1_0_1"/>
<dbReference type="InParanoid" id="Q15047"/>
<dbReference type="OMA" id="IRAVTNC"/>
<dbReference type="OrthoDB" id="308383at2759"/>
<dbReference type="PAN-GO" id="Q15047">
    <property type="GO annotations" value="6 GO annotations based on evolutionary models"/>
</dbReference>
<dbReference type="PhylomeDB" id="Q15047"/>
<dbReference type="TreeFam" id="TF106411"/>
<dbReference type="BioCyc" id="MetaCyc:HS07042-MONOMER"/>
<dbReference type="BRENDA" id="2.1.1.355">
    <property type="organism ID" value="2681"/>
</dbReference>
<dbReference type="BRENDA" id="2.1.1.366">
    <property type="organism ID" value="2681"/>
</dbReference>
<dbReference type="BRENDA" id="2.1.1.368">
    <property type="organism ID" value="2681"/>
</dbReference>
<dbReference type="PathwayCommons" id="Q15047"/>
<dbReference type="Reactome" id="R-HSA-3214841">
    <property type="pathway name" value="PKMTs methylate histone lysines"/>
</dbReference>
<dbReference type="Reactome" id="R-HSA-9843940">
    <property type="pathway name" value="Regulation of endogenous retroelements by KRAB-ZFP proteins"/>
</dbReference>
<dbReference type="Reactome" id="R-HSA-9843970">
    <property type="pathway name" value="Regulation of endogenous retroelements by the Human Silencing Hub (HUSH) complex"/>
</dbReference>
<dbReference type="SignaLink" id="Q15047"/>
<dbReference type="SIGNOR" id="Q15047"/>
<dbReference type="BioGRID-ORCS" id="9869">
    <property type="hits" value="300 hits in 1212 CRISPR screens"/>
</dbReference>
<dbReference type="ChiTaRS" id="SETDB1">
    <property type="organism name" value="human"/>
</dbReference>
<dbReference type="EvolutionaryTrace" id="Q15047"/>
<dbReference type="GeneWiki" id="SETDB1"/>
<dbReference type="GenomeRNAi" id="9869"/>
<dbReference type="Pharos" id="Q15047">
    <property type="development level" value="Tbio"/>
</dbReference>
<dbReference type="PRO" id="PR:Q15047"/>
<dbReference type="Proteomes" id="UP000005640">
    <property type="component" value="Chromosome 1"/>
</dbReference>
<dbReference type="RNAct" id="Q15047">
    <property type="molecule type" value="protein"/>
</dbReference>
<dbReference type="Bgee" id="ENSG00000143379">
    <property type="expression patterns" value="Expressed in sural nerve and 185 other cell types or tissues"/>
</dbReference>
<dbReference type="ExpressionAtlas" id="Q15047">
    <property type="expression patterns" value="baseline and differential"/>
</dbReference>
<dbReference type="GO" id="GO:0005694">
    <property type="term" value="C:chromosome"/>
    <property type="evidence" value="ECO:0007669"/>
    <property type="project" value="UniProtKB-SubCell"/>
</dbReference>
<dbReference type="GO" id="GO:0005737">
    <property type="term" value="C:cytoplasm"/>
    <property type="evidence" value="ECO:0000315"/>
    <property type="project" value="UniProtKB"/>
</dbReference>
<dbReference type="GO" id="GO:0043231">
    <property type="term" value="C:intracellular membrane-bounded organelle"/>
    <property type="evidence" value="ECO:0000314"/>
    <property type="project" value="HPA"/>
</dbReference>
<dbReference type="GO" id="GO:0005654">
    <property type="term" value="C:nucleoplasm"/>
    <property type="evidence" value="ECO:0000314"/>
    <property type="project" value="HPA"/>
</dbReference>
<dbReference type="GO" id="GO:0005634">
    <property type="term" value="C:nucleus"/>
    <property type="evidence" value="ECO:0000314"/>
    <property type="project" value="UniProt"/>
</dbReference>
<dbReference type="GO" id="GO:0003682">
    <property type="term" value="F:chromatin binding"/>
    <property type="evidence" value="ECO:0000314"/>
    <property type="project" value="UniProtKB"/>
</dbReference>
<dbReference type="GO" id="GO:0003677">
    <property type="term" value="F:DNA binding"/>
    <property type="evidence" value="ECO:0007669"/>
    <property type="project" value="InterPro"/>
</dbReference>
<dbReference type="GO" id="GO:0140938">
    <property type="term" value="F:histone H3 methyltransferase activity"/>
    <property type="evidence" value="ECO:0000304"/>
    <property type="project" value="Reactome"/>
</dbReference>
<dbReference type="GO" id="GO:0046974">
    <property type="term" value="F:histone H3K9 methyltransferase activity"/>
    <property type="evidence" value="ECO:0000314"/>
    <property type="project" value="UniProtKB"/>
</dbReference>
<dbReference type="GO" id="GO:0140948">
    <property type="term" value="F:histone H3K9 monomethyltransferase activity"/>
    <property type="evidence" value="ECO:0007669"/>
    <property type="project" value="RHEA"/>
</dbReference>
<dbReference type="GO" id="GO:0140949">
    <property type="term" value="F:histone H3K9 trimethyltransferase activity"/>
    <property type="evidence" value="ECO:0000314"/>
    <property type="project" value="UniProtKB"/>
</dbReference>
<dbReference type="GO" id="GO:0140947">
    <property type="term" value="F:histone H3K9me2 methyltransferase activity"/>
    <property type="evidence" value="ECO:0007669"/>
    <property type="project" value="UniProtKB-EC"/>
</dbReference>
<dbReference type="GO" id="GO:1990841">
    <property type="term" value="F:promoter-specific chromatin binding"/>
    <property type="evidence" value="ECO:0000314"/>
    <property type="project" value="UniProtKB"/>
</dbReference>
<dbReference type="GO" id="GO:0008270">
    <property type="term" value="F:zinc ion binding"/>
    <property type="evidence" value="ECO:0007669"/>
    <property type="project" value="InterPro"/>
</dbReference>
<dbReference type="GO" id="GO:0006346">
    <property type="term" value="P:DNA methylation-dependent constitutive heterochromatin formation"/>
    <property type="evidence" value="ECO:0000315"/>
    <property type="project" value="UniProtKB"/>
</dbReference>
<dbReference type="GO" id="GO:0070828">
    <property type="term" value="P:heterochromatin organization"/>
    <property type="evidence" value="ECO:0000318"/>
    <property type="project" value="GO_Central"/>
</dbReference>
<dbReference type="GO" id="GO:0032259">
    <property type="term" value="P:methylation"/>
    <property type="evidence" value="ECO:0007669"/>
    <property type="project" value="UniProtKB-KW"/>
</dbReference>
<dbReference type="GO" id="GO:0010629">
    <property type="term" value="P:negative regulation of gene expression"/>
    <property type="evidence" value="ECO:0000314"/>
    <property type="project" value="UniProt"/>
</dbReference>
<dbReference type="GO" id="GO:0141005">
    <property type="term" value="P:transposable element silencing by heterochromatin formation"/>
    <property type="evidence" value="ECO:0000250"/>
    <property type="project" value="UniProtKB"/>
</dbReference>
<dbReference type="CDD" id="cd01395">
    <property type="entry name" value="HMT_MBD"/>
    <property type="match status" value="1"/>
</dbReference>
<dbReference type="CDD" id="cd10517">
    <property type="entry name" value="SET_SETDB1"/>
    <property type="match status" value="1"/>
</dbReference>
<dbReference type="CDD" id="cd20382">
    <property type="entry name" value="Tudor_SETDB1_rpt1"/>
    <property type="match status" value="1"/>
</dbReference>
<dbReference type="CDD" id="cd21181">
    <property type="entry name" value="Tudor_SETDB1_rpt2"/>
    <property type="match status" value="1"/>
</dbReference>
<dbReference type="FunFam" id="2.170.270.10:FF:000017">
    <property type="entry name" value="Histone-lysine N-methyltransferase"/>
    <property type="match status" value="1"/>
</dbReference>
<dbReference type="FunFam" id="2.170.270.10:FF:000020">
    <property type="entry name" value="Histone-lysine N-methyltransferase"/>
    <property type="match status" value="1"/>
</dbReference>
<dbReference type="FunFam" id="2.30.30.140:FF:000034">
    <property type="entry name" value="Histone-lysine N-methyltransferase"/>
    <property type="match status" value="1"/>
</dbReference>
<dbReference type="FunFam" id="2.30.30.140:FF:000037">
    <property type="entry name" value="Histone-lysine N-methyltransferase"/>
    <property type="match status" value="1"/>
</dbReference>
<dbReference type="FunFam" id="2.30.30.140:FF:000054">
    <property type="entry name" value="Histone-lysine N-methyltransferase"/>
    <property type="match status" value="1"/>
</dbReference>
<dbReference type="Gene3D" id="2.30.30.140">
    <property type="match status" value="3"/>
</dbReference>
<dbReference type="Gene3D" id="2.170.270.10">
    <property type="entry name" value="SET domain"/>
    <property type="match status" value="2"/>
</dbReference>
<dbReference type="InterPro" id="IPR016177">
    <property type="entry name" value="DNA-bd_dom_sf"/>
</dbReference>
<dbReference type="InterPro" id="IPR040880">
    <property type="entry name" value="DUF5604"/>
</dbReference>
<dbReference type="InterPro" id="IPR025796">
    <property type="entry name" value="Hist-Lys_N-MeTrfase_SETDB1"/>
</dbReference>
<dbReference type="InterPro" id="IPR001739">
    <property type="entry name" value="Methyl_CpG_DNA-bd"/>
</dbReference>
<dbReference type="InterPro" id="IPR003616">
    <property type="entry name" value="Post-SET_dom"/>
</dbReference>
<dbReference type="InterPro" id="IPR007728">
    <property type="entry name" value="Pre-SET_dom"/>
</dbReference>
<dbReference type="InterPro" id="IPR001214">
    <property type="entry name" value="SET_dom"/>
</dbReference>
<dbReference type="InterPro" id="IPR046341">
    <property type="entry name" value="SET_dom_sf"/>
</dbReference>
<dbReference type="InterPro" id="IPR047232">
    <property type="entry name" value="SETDB1/2-like_MBD"/>
</dbReference>
<dbReference type="InterPro" id="IPR051516">
    <property type="entry name" value="SETDB_methyltransferase"/>
</dbReference>
<dbReference type="InterPro" id="IPR002999">
    <property type="entry name" value="Tudor"/>
</dbReference>
<dbReference type="InterPro" id="IPR041292">
    <property type="entry name" value="Tudor_4"/>
</dbReference>
<dbReference type="InterPro" id="IPR041291">
    <property type="entry name" value="TUDOR_5"/>
</dbReference>
<dbReference type="PANTHER" id="PTHR46024">
    <property type="entry name" value="HISTONE-LYSINE N-METHYLTRANSFERASE EGGLESS"/>
    <property type="match status" value="1"/>
</dbReference>
<dbReference type="PANTHER" id="PTHR46024:SF2">
    <property type="entry name" value="HISTONE-LYSINE N-METHYLTRANSFERASE SETDB1"/>
    <property type="match status" value="1"/>
</dbReference>
<dbReference type="Pfam" id="PF18300">
    <property type="entry name" value="DUF5604"/>
    <property type="match status" value="1"/>
</dbReference>
<dbReference type="Pfam" id="PF01429">
    <property type="entry name" value="MBD"/>
    <property type="match status" value="1"/>
</dbReference>
<dbReference type="Pfam" id="PF05033">
    <property type="entry name" value="Pre-SET"/>
    <property type="match status" value="1"/>
</dbReference>
<dbReference type="Pfam" id="PF00856">
    <property type="entry name" value="SET"/>
    <property type="match status" value="1"/>
</dbReference>
<dbReference type="Pfam" id="PF18358">
    <property type="entry name" value="Tudor_4"/>
    <property type="match status" value="1"/>
</dbReference>
<dbReference type="Pfam" id="PF18359">
    <property type="entry name" value="Tudor_5"/>
    <property type="match status" value="1"/>
</dbReference>
<dbReference type="SMART" id="SM00391">
    <property type="entry name" value="MBD"/>
    <property type="match status" value="1"/>
</dbReference>
<dbReference type="SMART" id="SM00468">
    <property type="entry name" value="PreSET"/>
    <property type="match status" value="1"/>
</dbReference>
<dbReference type="SMART" id="SM00317">
    <property type="entry name" value="SET"/>
    <property type="match status" value="1"/>
</dbReference>
<dbReference type="SMART" id="SM00333">
    <property type="entry name" value="TUDOR"/>
    <property type="match status" value="2"/>
</dbReference>
<dbReference type="SUPFAM" id="SSF54171">
    <property type="entry name" value="DNA-binding domain"/>
    <property type="match status" value="1"/>
</dbReference>
<dbReference type="SUPFAM" id="SSF82199">
    <property type="entry name" value="SET domain"/>
    <property type="match status" value="1"/>
</dbReference>
<dbReference type="PROSITE" id="PS50982">
    <property type="entry name" value="MBD"/>
    <property type="match status" value="1"/>
</dbReference>
<dbReference type="PROSITE" id="PS50868">
    <property type="entry name" value="POST_SET"/>
    <property type="match status" value="1"/>
</dbReference>
<dbReference type="PROSITE" id="PS50867">
    <property type="entry name" value="PRE_SET"/>
    <property type="match status" value="1"/>
</dbReference>
<dbReference type="PROSITE" id="PS51573">
    <property type="entry name" value="SAM_MT43_SUVAR39_1"/>
    <property type="match status" value="1"/>
</dbReference>
<dbReference type="PROSITE" id="PS50280">
    <property type="entry name" value="SET"/>
    <property type="match status" value="1"/>
</dbReference>
<comment type="function">
    <text evidence="2 11 12 24 26 27 28 34">Histone methyltransferase that specifically trimethylates 'Lys-9' of histone H3. H3 'Lys-9' trimethylation represents a specific tag for epigenetic transcriptional repression by recruiting HP1 (CBX1, CBX3 and/or CBX5) proteins to methylated histones. Mainly functions in euchromatin regions, thereby playing a central role in the silencing of euchromatic genes. H3 'Lys-9' trimethylation is coordinated with DNA methylation (PubMed:12869583, PubMed:27237050, PubMed:39096901). Required for HUSH-mediated heterochromatin formation and gene silencing. Forms a complex with MBD1 and ATF7IP that represses transcription and couples DNA methylation and histone 'Lys-9' trimethylation (PubMed:14536086, PubMed:27732843). Its activity is dependent on MBD1 and is heritably maintained through DNA replication by being recruited by CAF-1 (PubMed:14536086). SETDB1 is targeted to histone H3 by TRIM28/TIF1B, a factor recruited by KRAB zinc-finger proteins. Probably forms a corepressor complex required for activated KRAS-mediated promoter hypermethylation and transcriptional silencing of tumor suppressor genes (TSGs) or other tumor-related genes in colorectal cancer (CRC) cells (PubMed:24623306). Required to maintain a transcriptionally repressive state of genes in undifferentiated embryonic stem cells (ESCs) (PubMed:24623306). In ESCs, in collaboration with TRIM28, is also required for H3K9me3 and silencing of endogenous and introduced retroviruses in a DNA-methylation independent-pathway (By similarity). Associates at promoter regions of tumor suppressor genes (TSGs) leading to their gene silencing (PubMed:24623306). The SETDB1-TRIM28-ZNF274 complex may play a role in recruiting ATRX to the 3'-exons of zinc-finger coding genes with atypical chromatin signatures to establish or maintain/protect H3K9me3 at these transcriptionally active regions (PubMed:27029610).</text>
</comment>
<comment type="catalytic activity">
    <reaction evidence="8 12">
        <text>N(6),N(6)-dimethyl-L-lysyl(9)-[histone H3] + S-adenosyl-L-methionine = N(6),N(6),N(6)-trimethyl-L-lysyl(9)-[histone H3] + S-adenosyl-L-homocysteine + H(+)</text>
        <dbReference type="Rhea" id="RHEA:60288"/>
        <dbReference type="Rhea" id="RHEA-COMP:15538"/>
        <dbReference type="Rhea" id="RHEA-COMP:15541"/>
        <dbReference type="ChEBI" id="CHEBI:15378"/>
        <dbReference type="ChEBI" id="CHEBI:57856"/>
        <dbReference type="ChEBI" id="CHEBI:59789"/>
        <dbReference type="ChEBI" id="CHEBI:61961"/>
        <dbReference type="ChEBI" id="CHEBI:61976"/>
        <dbReference type="EC" id="2.1.1.366"/>
    </reaction>
    <physiologicalReaction direction="left-to-right" evidence="12">
        <dbReference type="Rhea" id="RHEA:60289"/>
    </physiologicalReaction>
</comment>
<comment type="biophysicochemical properties">
    <kinetics>
        <KM evidence="12">1.78 uM for S-adenosyl-L-methionine</KM>
    </kinetics>
</comment>
<comment type="subunit">
    <text evidence="2 10 12 13 15 16 17 18 19 21 22 23 24 26 29 32 33">Part of a complex containing at least CDYL, REST, WIZ, SETDB1, EHMT1 and EHMT2 (PubMed:19061646). Forms a complex with ATRX, TRIM28 and ZNF274 (PubMed:27029610). Probably part of a corepressor complex containing ZNF304, TRIM28, SETDB1 and DNMT1 (PubMed:24623306). Interacts with TRIM28/TIF1B (PubMed:11959841). Interacts with ATF7IP and ATF7IP2; the interaction with ATF7IP protects SETDB1 from proteasomal degradation and is required to stimulate histone methyltransferase activity and facilitate the conversion of dimethylated to trimethylated H3 'Lys-9' (PubMed:14536086, PubMed:15691849). Interacts with CBX1 and CBX5 (PubMed:15899859). Interacts with DNMT3A and DNMT3B (PubMed:16682412). Interacts with SUMO2. Interacts with MPHOSPH8 (PubMed:20871592). Interacts with ERG (By similarity). Interacts with HDAC1, HDAC2, SIN3A and SIN3B (By similarity). Interacts with ATRX. Interacts with RESF1 (By similarity). Interacts with ZNF638 (PubMed:30487602). Interacts with TASOR (By similarity). Interacts with ZNF263; recruited to the SIX3 promoter along with other proteins involved in chromatin modification and transcriptional corepression where it contributes to transcriptional repression (PubMed:32051553). Interacts with PHF13; the interaction probably enhances SETDB1 chromatin-associated levels and activity (PubMed:23034801). Interacts with VRK1 (PubMed:37179361).</text>
</comment>
<comment type="interaction">
    <interactant intactId="EBI-79691">
        <id>Q15047</id>
    </interactant>
    <interactant intactId="EBI-296087">
        <id>P31749</id>
        <label>AKT1</label>
    </interactant>
    <organismsDiffer>false</organismsDiffer>
    <experiments>9</experiments>
</comment>
<comment type="interaction">
    <interactant intactId="EBI-79691">
        <id>Q15047</id>
    </interactant>
    <interactant intactId="EBI-930143">
        <id>Q6P1J9</id>
        <label>CDC73</label>
    </interactant>
    <organismsDiffer>false</organismsDiffer>
    <experiments>3</experiments>
</comment>
<comment type="interaction">
    <interactant intactId="EBI-79691">
        <id>Q15047</id>
    </interactant>
    <interactant intactId="EBI-923653">
        <id>Q9Y6K1</id>
        <label>DNMT3A</label>
    </interactant>
    <organismsDiffer>false</organismsDiffer>
    <experiments>7</experiments>
</comment>
<comment type="interaction">
    <interactant intactId="EBI-79691">
        <id>Q15047</id>
    </interactant>
    <interactant intactId="EBI-867196">
        <id>Q9UIS9</id>
        <label>MBD1</label>
    </interactant>
    <organismsDiffer>false</organismsDiffer>
    <experiments>3</experiments>
</comment>
<comment type="interaction">
    <interactant intactId="EBI-79691">
        <id>Q15047</id>
    </interactant>
    <interactant intactId="EBI-719989">
        <id>Q9NWR8</id>
        <label>MCUB</label>
    </interactant>
    <organismsDiffer>false</organismsDiffer>
    <experiments>3</experiments>
</comment>
<comment type="interaction">
    <interactant intactId="EBI-79691">
        <id>Q15047</id>
    </interactant>
    <interactant intactId="EBI-2653928">
        <id>Q99549</id>
        <label>MPHOSPH8</label>
    </interactant>
    <organismsDiffer>false</organismsDiffer>
    <experiments>3</experiments>
</comment>
<comment type="interaction">
    <interactant intactId="EBI-9090795">
        <id>Q15047-2</id>
    </interactant>
    <interactant intactId="EBI-751746">
        <id>Q15027</id>
        <label>ACAP1</label>
    </interactant>
    <organismsDiffer>false</organismsDiffer>
    <experiments>3</experiments>
</comment>
<comment type="interaction">
    <interactant intactId="EBI-9090795">
        <id>Q15047-2</id>
    </interactant>
    <interactant intactId="EBI-1045357">
        <id>Q9NPJ3</id>
        <label>ACOT13</label>
    </interactant>
    <organismsDiffer>false</organismsDiffer>
    <experiments>3</experiments>
</comment>
<comment type="interaction">
    <interactant intactId="EBI-9090795">
        <id>Q15047-2</id>
    </interactant>
    <interactant intactId="EBI-25833200">
        <id>Q8IWZ3-3</id>
        <label>ANKHD1</label>
    </interactant>
    <organismsDiffer>false</organismsDiffer>
    <experiments>3</experiments>
</comment>
<comment type="interaction">
    <interactant intactId="EBI-9090795">
        <id>Q15047-2</id>
    </interactant>
    <interactant intactId="EBI-3447299">
        <id>O43307</id>
        <label>ARHGEF9</label>
    </interactant>
    <organismsDiffer>false</organismsDiffer>
    <experiments>3</experiments>
</comment>
<comment type="interaction">
    <interactant intactId="EBI-9090795">
        <id>Q15047-2</id>
    </interactant>
    <interactant intactId="EBI-5280499">
        <id>Q66PJ3-4</id>
        <label>ARL6IP4</label>
    </interactant>
    <organismsDiffer>false</organismsDiffer>
    <experiments>3</experiments>
</comment>
<comment type="interaction">
    <interactant intactId="EBI-9090795">
        <id>Q15047-2</id>
    </interactant>
    <interactant intactId="EBI-2323092">
        <id>Q9Y576</id>
        <label>ASB1</label>
    </interactant>
    <organismsDiffer>false</organismsDiffer>
    <experiments>3</experiments>
</comment>
<comment type="interaction">
    <interactant intactId="EBI-9090795">
        <id>Q15047-2</id>
    </interactant>
    <interactant intactId="EBI-8994378">
        <id>Q14032</id>
        <label>BAAT</label>
    </interactant>
    <organismsDiffer>false</organismsDiffer>
    <experiments>3</experiments>
</comment>
<comment type="interaction">
    <interactant intactId="EBI-9090795">
        <id>Q15047-2</id>
    </interactant>
    <interactant intactId="EBI-25884811">
        <id>Q13072</id>
        <label>BAGE</label>
    </interactant>
    <organismsDiffer>false</organismsDiffer>
    <experiments>3</experiments>
</comment>
<comment type="interaction">
    <interactant intactId="EBI-9090795">
        <id>Q15047-2</id>
    </interactant>
    <interactant intactId="EBI-11524452">
        <id>Q8N9N5-2</id>
        <label>BANP</label>
    </interactant>
    <organismsDiffer>false</organismsDiffer>
    <experiments>3</experiments>
</comment>
<comment type="interaction">
    <interactant intactId="EBI-9090795">
        <id>Q15047-2</id>
    </interactant>
    <interactant intactId="EBI-6598617">
        <id>Q6PH81</id>
        <label>C16orf87</label>
    </interactant>
    <organismsDiffer>false</organismsDiffer>
    <experiments>3</experiments>
</comment>
<comment type="interaction">
    <interactant intactId="EBI-9090795">
        <id>Q15047-2</id>
    </interactant>
    <interactant intactId="EBI-17641690">
        <id>Q96HJ3-2</id>
        <label>CCDC34</label>
    </interactant>
    <organismsDiffer>false</organismsDiffer>
    <experiments>3</experiments>
</comment>
<comment type="interaction">
    <interactant intactId="EBI-9090795">
        <id>Q15047-2</id>
    </interactant>
    <interactant intactId="EBI-720151">
        <id>Q96A33</id>
        <label>CCDC47</label>
    </interactant>
    <organismsDiffer>false</organismsDiffer>
    <experiments>3</experiments>
</comment>
<comment type="interaction">
    <interactant intactId="EBI-9090795">
        <id>Q15047-2</id>
    </interactant>
    <interactant intactId="EBI-17967022">
        <id>Q96LY2-2</id>
        <label>CCDC74B</label>
    </interactant>
    <organismsDiffer>false</organismsDiffer>
    <experiments>3</experiments>
</comment>
<comment type="interaction">
    <interactant intactId="EBI-9090795">
        <id>Q15047-2</id>
    </interactant>
    <interactant intactId="EBI-713148">
        <id>Q9GZT6</id>
        <label>CCDC90B</label>
    </interactant>
    <organismsDiffer>false</organismsDiffer>
    <experiments>3</experiments>
</comment>
<comment type="interaction">
    <interactant intactId="EBI-9090795">
        <id>Q15047-2</id>
    </interactant>
    <interactant intactId="EBI-1210604">
        <id>Q7Z7K6</id>
        <label>CENPV</label>
    </interactant>
    <organismsDiffer>false</organismsDiffer>
    <experiments>3</experiments>
</comment>
<comment type="interaction">
    <interactant intactId="EBI-9090795">
        <id>Q15047-2</id>
    </interactant>
    <interactant intactId="EBI-742887">
        <id>Q8TAP6</id>
        <label>CEP76</label>
    </interactant>
    <organismsDiffer>false</organismsDiffer>
    <experiments>3</experiments>
</comment>
<comment type="interaction">
    <interactant intactId="EBI-9090795">
        <id>Q15047-2</id>
    </interactant>
    <interactant intactId="EBI-743375">
        <id>Q9NX63</id>
        <label>CHCHD3</label>
    </interactant>
    <organismsDiffer>false</organismsDiffer>
    <experiments>3</experiments>
</comment>
<comment type="interaction">
    <interactant intactId="EBI-9090795">
        <id>Q15047-2</id>
    </interactant>
    <interactant intactId="EBI-372594">
        <id>Q99828</id>
        <label>CIB1</label>
    </interactant>
    <organismsDiffer>false</organismsDiffer>
    <experiments>3</experiments>
</comment>
<comment type="interaction">
    <interactant intactId="EBI-9090795">
        <id>Q15047-2</id>
    </interactant>
    <interactant intactId="EBI-2116369">
        <id>P15169</id>
        <label>CPN1</label>
    </interactant>
    <organismsDiffer>false</organismsDiffer>
    <experiments>3</experiments>
</comment>
<comment type="interaction">
    <interactant intactId="EBI-9090795">
        <id>Q15047-2</id>
    </interactant>
    <interactant intactId="EBI-2874283">
        <id>P43234</id>
        <label>CTSO</label>
    </interactant>
    <organismsDiffer>false</organismsDiffer>
    <experiments>3</experiments>
</comment>
<comment type="interaction">
    <interactant intactId="EBI-9090795">
        <id>Q15047-2</id>
    </interactant>
    <interactant intactId="EBI-724515">
        <id>O95424</id>
        <label>DEXI</label>
    </interactant>
    <organismsDiffer>false</organismsDiffer>
    <experiments>3</experiments>
</comment>
<comment type="interaction">
    <interactant intactId="EBI-9090795">
        <id>Q15047-2</id>
    </interactant>
    <interactant intactId="EBI-748674">
        <id>O43598</id>
        <label>DNPH1</label>
    </interactant>
    <organismsDiffer>false</organismsDiffer>
    <experiments>3</experiments>
</comment>
<comment type="interaction">
    <interactant intactId="EBI-9090795">
        <id>Q15047-2</id>
    </interactant>
    <interactant intactId="EBI-6624459">
        <id>P21728</id>
        <label>DRD1</label>
    </interactant>
    <organismsDiffer>false</organismsDiffer>
    <experiments>3</experiments>
</comment>
<comment type="interaction">
    <interactant intactId="EBI-9090795">
        <id>Q15047-2</id>
    </interactant>
    <interactant intactId="EBI-347740">
        <id>P60228</id>
        <label>EIF3E</label>
    </interactant>
    <organismsDiffer>false</organismsDiffer>
    <experiments>3</experiments>
</comment>
<comment type="interaction">
    <interactant intactId="EBI-9090795">
        <id>Q15047-2</id>
    </interactant>
    <interactant intactId="EBI-25885343">
        <id>Q96J88-3</id>
        <label>EPSTI1</label>
    </interactant>
    <organismsDiffer>false</organismsDiffer>
    <experiments>3</experiments>
</comment>
<comment type="interaction">
    <interactant intactId="EBI-9090795">
        <id>Q15047-2</id>
    </interactant>
    <interactant intactId="EBI-25885364">
        <id>Q8IVH2-2</id>
        <label>FOXP4</label>
    </interactant>
    <organismsDiffer>false</organismsDiffer>
    <experiments>3</experiments>
</comment>
<comment type="interaction">
    <interactant intactId="EBI-9090795">
        <id>Q15047-2</id>
    </interactant>
    <interactant intactId="EBI-13213391">
        <id>Q96NE9-2</id>
        <label>FRMD6</label>
    </interactant>
    <organismsDiffer>false</organismsDiffer>
    <experiments>3</experiments>
</comment>
<comment type="interaction">
    <interactant intactId="EBI-9090795">
        <id>Q15047-2</id>
    </interactant>
    <interactant intactId="EBI-21017948">
        <id>O14926</id>
        <label>FSCN2</label>
    </interactant>
    <organismsDiffer>false</organismsDiffer>
    <experiments>3</experiments>
</comment>
<comment type="interaction">
    <interactant intactId="EBI-9090795">
        <id>Q15047-2</id>
    </interactant>
    <interactant intactId="EBI-618189">
        <id>Q06547-2</id>
        <label>GABPB1</label>
    </interactant>
    <organismsDiffer>false</organismsDiffer>
    <experiments>3</experiments>
</comment>
<comment type="interaction">
    <interactant intactId="EBI-9090795">
        <id>Q15047-2</id>
    </interactant>
    <interactant intactId="EBI-9088619">
        <id>Q06547-3</id>
        <label>GABPB1</label>
    </interactant>
    <organismsDiffer>false</organismsDiffer>
    <experiments>3</experiments>
</comment>
<comment type="interaction">
    <interactant intactId="EBI-9090795">
        <id>Q15047-2</id>
    </interactant>
    <interactant intactId="EBI-21558069">
        <id>P19440-3</id>
        <label>GGT1</label>
    </interactant>
    <organismsDiffer>false</organismsDiffer>
    <experiments>3</experiments>
</comment>
<comment type="interaction">
    <interactant intactId="EBI-9090795">
        <id>Q15047-2</id>
    </interactant>
    <interactant intactId="EBI-7951023">
        <id>O95837</id>
        <label>GNA14</label>
    </interactant>
    <organismsDiffer>false</organismsDiffer>
    <experiments>3</experiments>
</comment>
<comment type="interaction">
    <interactant intactId="EBI-9090795">
        <id>Q15047-2</id>
    </interactant>
    <interactant intactId="EBI-25902214">
        <id>Q96F32</id>
        <label>GNB5</label>
    </interactant>
    <organismsDiffer>false</organismsDiffer>
    <experiments>3</experiments>
</comment>
<comment type="interaction">
    <interactant intactId="EBI-9090795">
        <id>Q15047-2</id>
    </interactant>
    <interactant intactId="EBI-25884370">
        <id>O43292-2</id>
        <label>GPAA1</label>
    </interactant>
    <organismsDiffer>false</organismsDiffer>
    <experiments>3</experiments>
</comment>
<comment type="interaction">
    <interactant intactId="EBI-9090795">
        <id>Q15047-2</id>
    </interactant>
    <interactant intactId="EBI-11959863">
        <id>Q9NWQ4-1</id>
        <label>GPATCH2L</label>
    </interactant>
    <organismsDiffer>false</organismsDiffer>
    <experiments>3</experiments>
</comment>
<comment type="interaction">
    <interactant intactId="EBI-9090795">
        <id>Q15047-2</id>
    </interactant>
    <interactant intactId="EBI-25885139">
        <id>Q9UJ42</id>
        <label>GPR160</label>
    </interactant>
    <organismsDiffer>false</organismsDiffer>
    <experiments>3</experiments>
</comment>
<comment type="interaction">
    <interactant intactId="EBI-9090795">
        <id>Q15047-2</id>
    </interactant>
    <interactant intactId="EBI-473189">
        <id>Q96D09</id>
        <label>GPRASP2</label>
    </interactant>
    <organismsDiffer>false</organismsDiffer>
    <experiments>3</experiments>
</comment>
<comment type="interaction">
    <interactant intactId="EBI-9090795">
        <id>Q15047-2</id>
    </interactant>
    <interactant intactId="EBI-12353035">
        <id>Q13322-4</id>
        <label>GRB10</label>
    </interactant>
    <organismsDiffer>false</organismsDiffer>
    <experiments>3</experiments>
</comment>
<comment type="interaction">
    <interactant intactId="EBI-9090795">
        <id>Q15047-2</id>
    </interactant>
    <interactant intactId="EBI-302023">
        <id>P62805</id>
        <label>H4C9</label>
    </interactant>
    <organismsDiffer>false</organismsDiffer>
    <experiments>3</experiments>
</comment>
<comment type="interaction">
    <interactant intactId="EBI-9090795">
        <id>Q15047-2</id>
    </interactant>
    <interactant intactId="EBI-357001">
        <id>O00165</id>
        <label>HAX1</label>
    </interactant>
    <organismsDiffer>false</organismsDiffer>
    <experiments>3</experiments>
</comment>
<comment type="interaction">
    <interactant intactId="EBI-9090795">
        <id>Q15047-2</id>
    </interactant>
    <interactant intactId="EBI-25858908">
        <id>Q8N7T0</id>
        <label>hCG_1820408</label>
    </interactant>
    <organismsDiffer>false</organismsDiffer>
    <experiments>3</experiments>
</comment>
<comment type="interaction">
    <interactant intactId="EBI-9090795">
        <id>Q15047-2</id>
    </interactant>
    <interactant intactId="EBI-352986">
        <id>P52597</id>
        <label>HNRNPF</label>
    </interactant>
    <organismsDiffer>false</organismsDiffer>
    <experiments>3</experiments>
</comment>
<comment type="interaction">
    <interactant intactId="EBI-9090795">
        <id>Q15047-2</id>
    </interactant>
    <interactant intactId="EBI-11317274">
        <id>Q92826</id>
        <label>HOXB13</label>
    </interactant>
    <organismsDiffer>false</organismsDiffer>
    <experiments>3</experiments>
</comment>
<comment type="interaction">
    <interactant intactId="EBI-9090795">
        <id>Q15047-2</id>
    </interactant>
    <interactant intactId="EBI-3923226">
        <id>P09017</id>
        <label>HOXC4</label>
    </interactant>
    <organismsDiffer>false</organismsDiffer>
    <experiments>3</experiments>
</comment>
<comment type="interaction">
    <interactant intactId="EBI-9090795">
        <id>Q15047-2</id>
    </interactant>
    <interactant intactId="EBI-10223348">
        <id>Q03933-2</id>
        <label>HSF2</label>
    </interactant>
    <organismsDiffer>false</organismsDiffer>
    <experiments>3</experiments>
</comment>
<comment type="interaction">
    <interactant intactId="EBI-9090795">
        <id>Q15047-2</id>
    </interactant>
    <interactant intactId="EBI-466029">
        <id>P42858</id>
        <label>HTT</label>
    </interactant>
    <organismsDiffer>false</organismsDiffer>
    <experiments>15</experiments>
</comment>
<comment type="interaction">
    <interactant intactId="EBI-9090795">
        <id>Q15047-2</id>
    </interactant>
    <interactant intactId="EBI-713450">
        <id>Q02363</id>
        <label>ID2</label>
    </interactant>
    <organismsDiffer>false</organismsDiffer>
    <experiments>3</experiments>
</comment>
<comment type="interaction">
    <interactant intactId="EBI-9090795">
        <id>Q15047-2</id>
    </interactant>
    <interactant intactId="EBI-11944538">
        <id>Q96FT9-2</id>
        <label>IFT43</label>
    </interactant>
    <organismsDiffer>false</organismsDiffer>
    <experiments>3</experiments>
</comment>
<comment type="interaction">
    <interactant intactId="EBI-9090795">
        <id>Q15047-2</id>
    </interactant>
    <interactant intactId="EBI-1055954">
        <id>P78318</id>
        <label>IGBP1</label>
    </interactant>
    <organismsDiffer>false</organismsDiffer>
    <experiments>3</experiments>
</comment>
<comment type="interaction">
    <interactant intactId="EBI-9090795">
        <id>Q15047-2</id>
    </interactant>
    <interactant intactId="EBI-715709">
        <id>P17936</id>
        <label>IGFBP3</label>
    </interactant>
    <organismsDiffer>false</organismsDiffer>
    <experiments>3</experiments>
</comment>
<comment type="interaction">
    <interactant intactId="EBI-9090795">
        <id>Q15047-2</id>
    </interactant>
    <interactant intactId="EBI-1757512">
        <id>P26951</id>
        <label>IL3RA</label>
    </interactant>
    <organismsDiffer>false</organismsDiffer>
    <experiments>3</experiments>
</comment>
<comment type="interaction">
    <interactant intactId="EBI-9090795">
        <id>Q15047-2</id>
    </interactant>
    <interactant intactId="EBI-743960">
        <id>Q8N5Z5</id>
        <label>KCTD17</label>
    </interactant>
    <organismsDiffer>false</organismsDiffer>
    <experiments>3</experiments>
</comment>
<comment type="interaction">
    <interactant intactId="EBI-9090795">
        <id>Q15047-2</id>
    </interactant>
    <interactant intactId="EBI-750750">
        <id>Q9Y4X4</id>
        <label>KLF12</label>
    </interactant>
    <organismsDiffer>false</organismsDiffer>
    <experiments>3</experiments>
</comment>
<comment type="interaction">
    <interactant intactId="EBI-9090795">
        <id>Q15047-2</id>
    </interactant>
    <interactant intactId="EBI-12893625">
        <id>Q5JUW0-3</id>
        <label>KRBOX4</label>
    </interactant>
    <organismsDiffer>false</organismsDiffer>
    <experiments>3</experiments>
</comment>
<comment type="interaction">
    <interactant intactId="EBI-9090795">
        <id>Q15047-2</id>
    </interactant>
    <interactant intactId="EBI-9996449">
        <id>Q9BYR8</id>
        <label>KRTAP3-1</label>
    </interactant>
    <organismsDiffer>false</organismsDiffer>
    <experiments>3</experiments>
</comment>
<comment type="interaction">
    <interactant intactId="EBI-9090795">
        <id>Q15047-2</id>
    </interactant>
    <interactant intactId="EBI-25835523">
        <id>Q9H2C1</id>
        <label>LHX5</label>
    </interactant>
    <organismsDiffer>false</organismsDiffer>
    <experiments>3</experiments>
</comment>
<comment type="interaction">
    <interactant intactId="EBI-9090795">
        <id>Q15047-2</id>
    </interactant>
    <interactant intactId="EBI-727376">
        <id>Q9Y234</id>
        <label>LIPT1</label>
    </interactant>
    <organismsDiffer>false</organismsDiffer>
    <experiments>3</experiments>
</comment>
<comment type="interaction">
    <interactant intactId="EBI-9090795">
        <id>Q15047-2</id>
    </interactant>
    <interactant intactId="EBI-725780">
        <id>P51884</id>
        <label>LUM</label>
    </interactant>
    <organismsDiffer>false</organismsDiffer>
    <experiments>3</experiments>
</comment>
<comment type="interaction">
    <interactant intactId="EBI-9090795">
        <id>Q15047-2</id>
    </interactant>
    <interactant intactId="EBI-2350695">
        <id>Q96GV9</id>
        <label>MACIR</label>
    </interactant>
    <organismsDiffer>false</organismsDiffer>
    <experiments>3</experiments>
</comment>
<comment type="interaction">
    <interactant intactId="EBI-9090795">
        <id>Q15047-2</id>
    </interactant>
    <interactant intactId="EBI-473834">
        <id>Q9H213</id>
        <label>MAGEH1</label>
    </interactant>
    <organismsDiffer>false</organismsDiffer>
    <experiments>3</experiments>
</comment>
<comment type="interaction">
    <interactant intactId="EBI-9090795">
        <id>Q15047-2</id>
    </interactant>
    <interactant intactId="EBI-3951604">
        <id>P80192</id>
        <label>MAP3K9</label>
    </interactant>
    <organismsDiffer>false</organismsDiffer>
    <experiments>3</experiments>
</comment>
<comment type="interaction">
    <interactant intactId="EBI-9090795">
        <id>Q15047-2</id>
    </interactant>
    <interactant intactId="EBI-298304">
        <id>Q15759</id>
        <label>MAPK11</label>
    </interactant>
    <organismsDiffer>false</organismsDiffer>
    <experiments>3</experiments>
</comment>
<comment type="interaction">
    <interactant intactId="EBI-9090795">
        <id>Q15047-2</id>
    </interactant>
    <interactant intactId="EBI-13288755">
        <id>A0JLT2-2</id>
        <label>MED19</label>
    </interactant>
    <organismsDiffer>false</organismsDiffer>
    <experiments>3</experiments>
</comment>
<comment type="interaction">
    <interactant intactId="EBI-9090795">
        <id>Q15047-2</id>
    </interactant>
    <interactant intactId="EBI-2829677">
        <id>P41218</id>
        <label>MNDA</label>
    </interactant>
    <organismsDiffer>false</organismsDiffer>
    <experiments>3</experiments>
</comment>
<comment type="interaction">
    <interactant intactId="EBI-9090795">
        <id>Q15047-2</id>
    </interactant>
    <interactant intactId="EBI-11109389">
        <id>Q8N983-3</id>
        <label>MRPL43</label>
    </interactant>
    <organismsDiffer>false</organismsDiffer>
    <experiments>3</experiments>
</comment>
<comment type="interaction">
    <interactant intactId="EBI-9090795">
        <id>Q15047-2</id>
    </interactant>
    <interactant intactId="EBI-746417">
        <id>Q16718</id>
        <label>NDUFA5</label>
    </interactant>
    <organismsDiffer>false</organismsDiffer>
    <experiments>3</experiments>
</comment>
<comment type="interaction">
    <interactant intactId="EBI-9090795">
        <id>Q15047-2</id>
    </interactant>
    <interactant intactId="EBI-748312">
        <id>P49821</id>
        <label>NDUFV1</label>
    </interactant>
    <organismsDiffer>false</organismsDiffer>
    <experiments>3</experiments>
</comment>
<comment type="interaction">
    <interactant intactId="EBI-9090795">
        <id>Q15047-2</id>
    </interactant>
    <interactant intactId="EBI-9978021">
        <id>Q2M1J6</id>
        <label>OXA1L</label>
    </interactant>
    <organismsDiffer>false</organismsDiffer>
    <experiments>3</experiments>
</comment>
<comment type="interaction">
    <interactant intactId="EBI-9090795">
        <id>Q15047-2</id>
    </interactant>
    <interactant intactId="EBI-359462">
        <id>Q16342</id>
        <label>PDCD2</label>
    </interactant>
    <organismsDiffer>false</organismsDiffer>
    <experiments>3</experiments>
</comment>
<comment type="interaction">
    <interactant intactId="EBI-9090795">
        <id>Q15047-2</id>
    </interactant>
    <interactant intactId="EBI-1043580">
        <id>Q9BRX2</id>
        <label>PELO</label>
    </interactant>
    <organismsDiffer>false</organismsDiffer>
    <experiments>3</experiments>
</comment>
<comment type="interaction">
    <interactant intactId="EBI-9090795">
        <id>Q15047-2</id>
    </interactant>
    <interactant intactId="EBI-2803703">
        <id>Q9Y6X2</id>
        <label>PIAS3</label>
    </interactant>
    <organismsDiffer>false</organismsDiffer>
    <experiments>3</experiments>
</comment>
<comment type="interaction">
    <interactant intactId="EBI-9090795">
        <id>Q15047-2</id>
    </interactant>
    <interactant intactId="EBI-6164623">
        <id>Q86T03</id>
        <label>PIP4P1</label>
    </interactant>
    <organismsDiffer>false</organismsDiffer>
    <experiments>3</experiments>
</comment>
<comment type="interaction">
    <interactant intactId="EBI-9090795">
        <id>Q15047-2</id>
    </interactant>
    <interactant intactId="EBI-10694821">
        <id>Q6P1J6-2</id>
        <label>PLB1</label>
    </interactant>
    <organismsDiffer>false</organismsDiffer>
    <experiments>3</experiments>
</comment>
<comment type="interaction">
    <interactant intactId="EBI-9090795">
        <id>Q15047-2</id>
    </interactant>
    <interactant intactId="EBI-741774">
        <id>Q9UNA4</id>
        <label>POLI</label>
    </interactant>
    <organismsDiffer>false</organismsDiffer>
    <experiments>3</experiments>
</comment>
<comment type="interaction">
    <interactant intactId="EBI-9090795">
        <id>Q15047-2</id>
    </interactant>
    <interactant intactId="EBI-2803380">
        <id>P07225</id>
        <label>PROS1</label>
    </interactant>
    <organismsDiffer>false</organismsDiffer>
    <experiments>3</experiments>
</comment>
<comment type="interaction">
    <interactant intactId="EBI-9090795">
        <id>Q15047-2</id>
    </interactant>
    <interactant intactId="EBI-25885259">
        <id>Q3YEC7-3</id>
        <label>RABL6</label>
    </interactant>
    <organismsDiffer>false</organismsDiffer>
    <experiments>3</experiments>
</comment>
<comment type="interaction">
    <interactant intactId="EBI-9090795">
        <id>Q15047-2</id>
    </interactant>
    <interactant intactId="EBI-2117080">
        <id>Q96I51</id>
        <label>RCC1L</label>
    </interactant>
    <organismsDiffer>false</organismsDiffer>
    <experiments>3</experiments>
</comment>
<comment type="interaction">
    <interactant intactId="EBI-9090795">
        <id>Q15047-2</id>
    </interactant>
    <interactant intactId="EBI-6426999">
        <id>O94844</id>
        <label>RHOBTB1</label>
    </interactant>
    <organismsDiffer>false</organismsDiffer>
    <experiments>3</experiments>
</comment>
<comment type="interaction">
    <interactant intactId="EBI-9090795">
        <id>Q15047-2</id>
    </interactant>
    <interactant intactId="EBI-3909436">
        <id>Q9UJD0</id>
        <label>RIMS3</label>
    </interactant>
    <organismsDiffer>false</organismsDiffer>
    <experiments>3</experiments>
</comment>
<comment type="interaction">
    <interactant intactId="EBI-9090795">
        <id>Q15047-2</id>
    </interactant>
    <interactant intactId="EBI-25884400">
        <id>Q9NWS8-3</id>
        <label>RMND1</label>
    </interactant>
    <organismsDiffer>false</organismsDiffer>
    <experiments>3</experiments>
</comment>
<comment type="interaction">
    <interactant intactId="EBI-9090795">
        <id>Q15047-2</id>
    </interactant>
    <interactant intactId="EBI-723587">
        <id>Q9Y508</id>
        <label>RNF114</label>
    </interactant>
    <organismsDiffer>false</organismsDiffer>
    <experiments>3</experiments>
</comment>
<comment type="interaction">
    <interactant intactId="EBI-9090795">
        <id>Q15047-2</id>
    </interactant>
    <interactant intactId="EBI-36513929">
        <id>Q9ULK6-3</id>
        <label>RNF150</label>
    </interactant>
    <organismsDiffer>false</organismsDiffer>
    <experiments>3</experiments>
</comment>
<comment type="interaction">
    <interactant intactId="EBI-9090795">
        <id>Q15047-2</id>
    </interactant>
    <interactant intactId="EBI-11027771">
        <id>P62913-2</id>
        <label>RPL11</label>
    </interactant>
    <organismsDiffer>false</organismsDiffer>
    <experiments>3</experiments>
</comment>
<comment type="interaction">
    <interactant intactId="EBI-9090795">
        <id>Q15047-2</id>
    </interactant>
    <interactant intactId="EBI-353383">
        <id>P18077</id>
        <label>RPL35A</label>
    </interactant>
    <organismsDiffer>false</organismsDiffer>
    <experiments>3</experiments>
</comment>
<comment type="interaction">
    <interactant intactId="EBI-9090795">
        <id>Q15047-2</id>
    </interactant>
    <interactant intactId="EBI-1224539">
        <id>Q99643</id>
        <label>SDHC</label>
    </interactant>
    <organismsDiffer>false</organismsDiffer>
    <experiments>3</experiments>
</comment>
<comment type="interaction">
    <interactant intactId="EBI-9090795">
        <id>Q15047-2</id>
    </interactant>
    <interactant intactId="EBI-745901">
        <id>Q14141</id>
        <label>SEPTIN6</label>
    </interactant>
    <organismsDiffer>false</organismsDiffer>
    <experiments>3</experiments>
</comment>
<comment type="interaction">
    <interactant intactId="EBI-9090795">
        <id>Q15047-2</id>
    </interactant>
    <interactant intactId="EBI-7481343">
        <id>Q01105-2</id>
        <label>SET</label>
    </interactant>
    <organismsDiffer>false</organismsDiffer>
    <experiments>3</experiments>
</comment>
<comment type="interaction">
    <interactant intactId="EBI-9090795">
        <id>Q15047-2</id>
    </interactant>
    <interactant intactId="EBI-632715">
        <id>Q13573</id>
        <label>SNW1</label>
    </interactant>
    <organismsDiffer>false</organismsDiffer>
    <experiments>3</experiments>
</comment>
<comment type="interaction">
    <interactant intactId="EBI-9090795">
        <id>Q15047-2</id>
    </interactant>
    <interactant intactId="EBI-10329478">
        <id>Q9Y5X0</id>
        <label>SNX10</label>
    </interactant>
    <organismsDiffer>false</organismsDiffer>
    <experiments>3</experiments>
</comment>
<comment type="interaction">
    <interactant intactId="EBI-9090795">
        <id>Q15047-2</id>
    </interactant>
    <interactant intactId="EBI-2481535">
        <id>Q8WV41</id>
        <label>SNX33</label>
    </interactant>
    <organismsDiffer>false</organismsDiffer>
    <experiments>3</experiments>
</comment>
<comment type="interaction">
    <interactant intactId="EBI-9090795">
        <id>Q15047-2</id>
    </interactant>
    <interactant intactId="EBI-1167533">
        <id>P56693</id>
        <label>SOX10</label>
    </interactant>
    <organismsDiffer>false</organismsDiffer>
    <experiments>3</experiments>
</comment>
<comment type="interaction">
    <interactant intactId="EBI-9090795">
        <id>Q15047-2</id>
    </interactant>
    <interactant intactId="EBI-25868254">
        <id>Q9BRW5</id>
        <label>SP2</label>
    </interactant>
    <organismsDiffer>false</organismsDiffer>
    <experiments>3</experiments>
</comment>
<comment type="interaction">
    <interactant intactId="EBI-9090795">
        <id>Q15047-2</id>
    </interactant>
    <interactant intactId="EBI-448878">
        <id>Q13586</id>
        <label>STIM1</label>
    </interactant>
    <organismsDiffer>false</organismsDiffer>
    <experiments>3</experiments>
</comment>
<comment type="interaction">
    <interactant intactId="EBI-9090795">
        <id>Q15047-2</id>
    </interactant>
    <interactant intactId="EBI-1053876">
        <id>Q13033-2</id>
        <label>STRN3</label>
    </interactant>
    <organismsDiffer>false</organismsDiffer>
    <experiments>3</experiments>
</comment>
<comment type="interaction">
    <interactant intactId="EBI-9090795">
        <id>Q15047-2</id>
    </interactant>
    <interactant intactId="EBI-11321949">
        <id>O43761</id>
        <label>SYNGR3</label>
    </interactant>
    <organismsDiffer>false</organismsDiffer>
    <experiments>3</experiments>
</comment>
<comment type="interaction">
    <interactant intactId="EBI-9090795">
        <id>Q15047-2</id>
    </interactant>
    <interactant intactId="EBI-533224">
        <id>P15884</id>
        <label>TCF4</label>
    </interactant>
    <organismsDiffer>false</organismsDiffer>
    <experiments>3</experiments>
</comment>
<comment type="interaction">
    <interactant intactId="EBI-9090795">
        <id>Q15047-2</id>
    </interactant>
    <interactant intactId="EBI-725275">
        <id>Q92481</id>
        <label>TFAP2B</label>
    </interactant>
    <organismsDiffer>false</organismsDiffer>
    <experiments>3</experiments>
</comment>
<comment type="interaction">
    <interactant intactId="EBI-9090795">
        <id>Q15047-2</id>
    </interactant>
    <interactant intactId="EBI-2821479">
        <id>Q3YBM2</id>
        <label>TMEM176B</label>
    </interactant>
    <organismsDiffer>false</organismsDiffer>
    <experiments>3</experiments>
</comment>
<comment type="interaction">
    <interactant intactId="EBI-9090795">
        <id>Q15047-2</id>
    </interactant>
    <interactant intactId="EBI-3922833">
        <id>Q969K7</id>
        <label>TMEM54</label>
    </interactant>
    <organismsDiffer>false</organismsDiffer>
    <experiments>3</experiments>
</comment>
<comment type="interaction">
    <interactant intactId="EBI-9090795">
        <id>Q15047-2</id>
    </interactant>
    <interactant intactId="EBI-1390168">
        <id>Q9H8H3</id>
        <label>TMT1A</label>
    </interactant>
    <organismsDiffer>false</organismsDiffer>
    <experiments>3</experiments>
</comment>
<comment type="interaction">
    <interactant intactId="EBI-9090795">
        <id>Q15047-2</id>
    </interactant>
    <interactant intactId="EBI-25902017">
        <id>P51580</id>
        <label>TPMT</label>
    </interactant>
    <organismsDiffer>false</organismsDiffer>
    <experiments>3</experiments>
</comment>
<comment type="interaction">
    <interactant intactId="EBI-9090795">
        <id>Q15047-2</id>
    </interactant>
    <interactant intactId="EBI-934061">
        <id>Q9UJA5</id>
        <label>TRMT6</label>
    </interactant>
    <organismsDiffer>false</organismsDiffer>
    <experiments>3</experiments>
</comment>
<comment type="interaction">
    <interactant intactId="EBI-9090795">
        <id>Q15047-2</id>
    </interactant>
    <interactant intactId="EBI-21353855">
        <id>Q99598</id>
        <label>TSNAX</label>
    </interactant>
    <organismsDiffer>false</organismsDiffer>
    <experiments>3</experiments>
</comment>
<comment type="interaction">
    <interactant intactId="EBI-9090795">
        <id>Q15047-2</id>
    </interactant>
    <interactant intactId="EBI-2512509">
        <id>Q8NB14</id>
        <label>USP38</label>
    </interactant>
    <organismsDiffer>false</organismsDiffer>
    <experiments>3</experiments>
</comment>
<comment type="interaction">
    <interactant intactId="EBI-9090795">
        <id>Q15047-2</id>
    </interactant>
    <interactant intactId="EBI-722343">
        <id>Q15836</id>
        <label>VAMP3</label>
    </interactant>
    <organismsDiffer>false</organismsDiffer>
    <experiments>3</experiments>
</comment>
<comment type="interaction">
    <interactant intactId="EBI-9090795">
        <id>Q15047-2</id>
    </interactant>
    <interactant intactId="EBI-21494555">
        <id>O95498</id>
        <label>VNN2</label>
    </interactant>
    <organismsDiffer>false</organismsDiffer>
    <experiments>3</experiments>
</comment>
<comment type="interaction">
    <interactant intactId="EBI-9090795">
        <id>Q15047-2</id>
    </interactant>
    <interactant intactId="EBI-12040603">
        <id>Q9NZC7-5</id>
        <label>WWOX</label>
    </interactant>
    <organismsDiffer>false</organismsDiffer>
    <experiments>3</experiments>
</comment>
<comment type="interaction">
    <interactant intactId="EBI-9090795">
        <id>Q15047-2</id>
    </interactant>
    <interactant intactId="EBI-14104088">
        <id>Q53FD0-2</id>
        <label>ZC2HC1C</label>
    </interactant>
    <organismsDiffer>false</organismsDiffer>
    <experiments>3</experiments>
</comment>
<comment type="interaction">
    <interactant intactId="EBI-9090795">
        <id>Q15047-2</id>
    </interactant>
    <interactant intactId="EBI-524753">
        <id>Q8IUH5</id>
        <label>ZDHHC17</label>
    </interactant>
    <organismsDiffer>false</organismsDiffer>
    <experiments>3</experiments>
</comment>
<comment type="interaction">
    <interactant intactId="EBI-9090795">
        <id>Q15047-2</id>
    </interactant>
    <interactant intactId="EBI-2849569">
        <id>Q9BQ24</id>
        <label>ZFYVE21</label>
    </interactant>
    <organismsDiffer>false</organismsDiffer>
    <experiments>3</experiments>
</comment>
<comment type="interaction">
    <interactant intactId="EBI-9090795">
        <id>Q15047-2</id>
    </interactant>
    <interactant intactId="EBI-2602314">
        <id>Q15776</id>
        <label>ZKSCAN8</label>
    </interactant>
    <organismsDiffer>false</organismsDiffer>
    <experiments>3</experiments>
</comment>
<comment type="interaction">
    <interactant intactId="EBI-9090795">
        <id>Q15047-2</id>
    </interactant>
    <interactant intactId="EBI-2556139">
        <id>Q14202</id>
        <label>ZMYM3</label>
    </interactant>
    <organismsDiffer>false</organismsDiffer>
    <experiments>3</experiments>
</comment>
<comment type="interaction">
    <interactant intactId="EBI-9090795">
        <id>Q15047-2</id>
    </interactant>
    <interactant intactId="EBI-25835471">
        <id>Q05CR2</id>
        <label>ZNF248</label>
    </interactant>
    <organismsDiffer>false</organismsDiffer>
    <experiments>3</experiments>
</comment>
<comment type="interaction">
    <interactant intactId="EBI-9090795">
        <id>Q15047-2</id>
    </interactant>
    <interactant intactId="EBI-2462313">
        <id>Q9UL40</id>
        <label>ZNF346</label>
    </interactant>
    <organismsDiffer>false</organismsDiffer>
    <experiments>3</experiments>
</comment>
<comment type="interaction">
    <interactant intactId="EBI-9090795">
        <id>Q15047-2</id>
    </interactant>
    <interactant intactId="EBI-12010736">
        <id>Q8N0Y2-2</id>
        <label>ZNF444</label>
    </interactant>
    <organismsDiffer>false</organismsDiffer>
    <experiments>3</experiments>
</comment>
<comment type="interaction">
    <interactant intactId="EBI-9090795">
        <id>Q15047-2</id>
    </interactant>
    <interactant intactId="EBI-751531">
        <id>O15535</id>
        <label>ZSCAN9</label>
    </interactant>
    <organismsDiffer>false</organismsDiffer>
    <experiments>3</experiments>
</comment>
<comment type="interaction">
    <interactant intactId="EBI-9090795">
        <id>Q15047-2</id>
    </interactant>
    <interactant intactId="EBI-25901704">
        <id>Q9HBH6</id>
    </interactant>
    <organismsDiffer>false</organismsDiffer>
    <experiments>3</experiments>
</comment>
<comment type="interaction">
    <interactant intactId="EBI-11149962">
        <id>Q15047-3</id>
    </interactant>
    <interactant intactId="EBI-7116203">
        <id>O75031</id>
        <label>HSF2BP</label>
    </interactant>
    <organismsDiffer>false</organismsDiffer>
    <experiments>3</experiments>
</comment>
<comment type="interaction">
    <interactant intactId="EBI-11149962">
        <id>Q15047-3</id>
    </interactant>
    <interactant intactId="EBI-742327">
        <id>Q15654</id>
        <label>TRIP6</label>
    </interactant>
    <organismsDiffer>false</organismsDiffer>
    <experiments>3</experiments>
</comment>
<comment type="subcellular location">
    <subcellularLocation>
        <location evidence="28">Nucleus</location>
    </subcellularLocation>
    <subcellularLocation>
        <location evidence="28">Cytoplasm</location>
    </subcellularLocation>
    <subcellularLocation>
        <location>Chromosome</location>
    </subcellularLocation>
    <text evidence="28">Associated with non-pericentromeric regions of chromatin. Excluded from nucleoli and islands of condensed chromatin.</text>
</comment>
<comment type="alternative products">
    <event type="alternative splicing"/>
    <isoform>
        <id>Q15047-1</id>
        <name>1</name>
        <sequence type="displayed"/>
    </isoform>
    <isoform>
        <id>Q15047-2</id>
        <name>2</name>
        <sequence type="described" ref="VSP_002217 VSP_002218"/>
    </isoform>
    <isoform>
        <id>Q15047-3</id>
        <name>3</name>
        <sequence type="described" ref="VSP_034600"/>
    </isoform>
</comment>
<comment type="tissue specificity">
    <text>Widely expressed. High expression in testis.</text>
</comment>
<comment type="domain">
    <text>The pre-SET, SET and post-SET domains are all required for methyltransferase activity. The 347-amino-acid insertion in the SET domain has no effect on the catalytic activity.</text>
</comment>
<comment type="domain">
    <text>Isoform 2 lacks all domains required for histone methyltransferase activity.</text>
</comment>
<comment type="domain">
    <text evidence="1">In the pre-SET domain, Cys residues bind 3 zinc ions that are arranged in a triangular cluster; some of these Cys residues contribute to the binding of two zinc ions within the cluster.</text>
</comment>
<comment type="PTM">
    <text evidence="28">Degraded by the proteasome, shielded by interaction with ATF7IP.</text>
</comment>
<comment type="PTM">
    <text evidence="27">Monoubiquitinated at Lys-867 by E2 enzymes of the UBE2E family. The conjugated-Ub is protected from deubiquitination by the SET domain. Monoubiquitination at Lys-867 is required for catalytic activity, H3K9 methylation and endogenous retrovirus silencing.</text>
</comment>
<comment type="miscellaneous">
    <text>Highly up-regulated in Huntington disease patients, suggesting that participates in the altered chromatin modulation and transcription dysfunction observed in Huntington disease. Its down-regulation has salubrious effects on patients, suggesting that it may be a promising treatment in Huntington disease patients.</text>
</comment>
<comment type="similarity">
    <text evidence="8">Belongs to the class V-like SAM-binding methyltransferase superfamily. Histone-lysine methyltransferase family. Suvar3-9 subfamily.</text>
</comment>
<comment type="caution">
    <text evidence="13 19 30 31">Was reported to be recruited by MBD1, during DNA replication, to form a S phase-specific complex that would facilitate methylation of H3 'Lys-9' during replication-coupled chromatin assembly and would be at least composed of the CAF-1 subunit CHAF1A, MBD1 and SETDB1 (PubMed:15327775, PubMed:17066076). However, these papers have been retracted because some data, results and conclusions are not reliable (PubMed:30849389, PubMed:31612521).</text>
</comment>
<comment type="caution">
    <text evidence="20 25 37">Was reported to trimethylate H3 'Lys-9', to interact with CHD7, NLK1 and PPARG and to be phosphorylated at Thr-796 (PubMed:17952062). However, this work was later retracted although its role in H3 'Lys-9' trimethylation is supported by other papers (PubMed:25358353).</text>
</comment>
<comment type="sequence caution" evidence="37">
    <conflict type="erroneous initiation">
        <sequence resource="EMBL-CDS" id="BAA06689"/>
    </conflict>
    <text>Extended N-terminus.</text>
</comment>
<gene>
    <name evidence="38" type="primary">SETDB1</name>
    <name evidence="35" type="synonym">ESET</name>
    <name type="synonym">KIAA0067</name>
    <name type="synonym">KMT1E</name>
</gene>
<name>SETB1_HUMAN</name>
<proteinExistence type="evidence at protein level"/>
<reference key="1">
    <citation type="journal article" date="1994" name="DNA Res.">
        <title>Prediction of the coding sequences of unidentified human genes. II. The coding sequences of 40 new genes (KIAA0041-KIAA0080) deduced by analysis of cDNA clones from human cell line KG-1.</title>
        <authorList>
            <person name="Nomura N."/>
            <person name="Nagase T."/>
            <person name="Miyajima N."/>
            <person name="Sazuka T."/>
            <person name="Tanaka A."/>
            <person name="Sato S."/>
            <person name="Seki N."/>
            <person name="Kawarabayasi Y."/>
            <person name="Ishikawa K."/>
            <person name="Tabata S."/>
        </authorList>
    </citation>
    <scope>NUCLEOTIDE SEQUENCE [LARGE SCALE MRNA] (ISOFORM 1)</scope>
    <source>
        <tissue>Bone marrow</tissue>
    </source>
</reference>
<reference key="2">
    <citation type="journal article" date="2006" name="Nature">
        <title>The DNA sequence and biological annotation of human chromosome 1.</title>
        <authorList>
            <person name="Gregory S.G."/>
            <person name="Barlow K.F."/>
            <person name="McLay K.E."/>
            <person name="Kaul R."/>
            <person name="Swarbreck D."/>
            <person name="Dunham A."/>
            <person name="Scott C.E."/>
            <person name="Howe K.L."/>
            <person name="Woodfine K."/>
            <person name="Spencer C.C.A."/>
            <person name="Jones M.C."/>
            <person name="Gillson C."/>
            <person name="Searle S."/>
            <person name="Zhou Y."/>
            <person name="Kokocinski F."/>
            <person name="McDonald L."/>
            <person name="Evans R."/>
            <person name="Phillips K."/>
            <person name="Atkinson A."/>
            <person name="Cooper R."/>
            <person name="Jones C."/>
            <person name="Hall R.E."/>
            <person name="Andrews T.D."/>
            <person name="Lloyd C."/>
            <person name="Ainscough R."/>
            <person name="Almeida J.P."/>
            <person name="Ambrose K.D."/>
            <person name="Anderson F."/>
            <person name="Andrew R.W."/>
            <person name="Ashwell R.I.S."/>
            <person name="Aubin K."/>
            <person name="Babbage A.K."/>
            <person name="Bagguley C.L."/>
            <person name="Bailey J."/>
            <person name="Beasley H."/>
            <person name="Bethel G."/>
            <person name="Bird C.P."/>
            <person name="Bray-Allen S."/>
            <person name="Brown J.Y."/>
            <person name="Brown A.J."/>
            <person name="Buckley D."/>
            <person name="Burton J."/>
            <person name="Bye J."/>
            <person name="Carder C."/>
            <person name="Chapman J.C."/>
            <person name="Clark S.Y."/>
            <person name="Clarke G."/>
            <person name="Clee C."/>
            <person name="Cobley V."/>
            <person name="Collier R.E."/>
            <person name="Corby N."/>
            <person name="Coville G.J."/>
            <person name="Davies J."/>
            <person name="Deadman R."/>
            <person name="Dunn M."/>
            <person name="Earthrowl M."/>
            <person name="Ellington A.G."/>
            <person name="Errington H."/>
            <person name="Frankish A."/>
            <person name="Frankland J."/>
            <person name="French L."/>
            <person name="Garner P."/>
            <person name="Garnett J."/>
            <person name="Gay L."/>
            <person name="Ghori M.R.J."/>
            <person name="Gibson R."/>
            <person name="Gilby L.M."/>
            <person name="Gillett W."/>
            <person name="Glithero R.J."/>
            <person name="Grafham D.V."/>
            <person name="Griffiths C."/>
            <person name="Griffiths-Jones S."/>
            <person name="Grocock R."/>
            <person name="Hammond S."/>
            <person name="Harrison E.S.I."/>
            <person name="Hart E."/>
            <person name="Haugen E."/>
            <person name="Heath P.D."/>
            <person name="Holmes S."/>
            <person name="Holt K."/>
            <person name="Howden P.J."/>
            <person name="Hunt A.R."/>
            <person name="Hunt S.E."/>
            <person name="Hunter G."/>
            <person name="Isherwood J."/>
            <person name="James R."/>
            <person name="Johnson C."/>
            <person name="Johnson D."/>
            <person name="Joy A."/>
            <person name="Kay M."/>
            <person name="Kershaw J.K."/>
            <person name="Kibukawa M."/>
            <person name="Kimberley A.M."/>
            <person name="King A."/>
            <person name="Knights A.J."/>
            <person name="Lad H."/>
            <person name="Laird G."/>
            <person name="Lawlor S."/>
            <person name="Leongamornlert D.A."/>
            <person name="Lloyd D.M."/>
            <person name="Loveland J."/>
            <person name="Lovell J."/>
            <person name="Lush M.J."/>
            <person name="Lyne R."/>
            <person name="Martin S."/>
            <person name="Mashreghi-Mohammadi M."/>
            <person name="Matthews L."/>
            <person name="Matthews N.S.W."/>
            <person name="McLaren S."/>
            <person name="Milne S."/>
            <person name="Mistry S."/>
            <person name="Moore M.J.F."/>
            <person name="Nickerson T."/>
            <person name="O'Dell C.N."/>
            <person name="Oliver K."/>
            <person name="Palmeiri A."/>
            <person name="Palmer S.A."/>
            <person name="Parker A."/>
            <person name="Patel D."/>
            <person name="Pearce A.V."/>
            <person name="Peck A.I."/>
            <person name="Pelan S."/>
            <person name="Phelps K."/>
            <person name="Phillimore B.J."/>
            <person name="Plumb R."/>
            <person name="Rajan J."/>
            <person name="Raymond C."/>
            <person name="Rouse G."/>
            <person name="Saenphimmachak C."/>
            <person name="Sehra H.K."/>
            <person name="Sheridan E."/>
            <person name="Shownkeen R."/>
            <person name="Sims S."/>
            <person name="Skuce C.D."/>
            <person name="Smith M."/>
            <person name="Steward C."/>
            <person name="Subramanian S."/>
            <person name="Sycamore N."/>
            <person name="Tracey A."/>
            <person name="Tromans A."/>
            <person name="Van Helmond Z."/>
            <person name="Wall M."/>
            <person name="Wallis J.M."/>
            <person name="White S."/>
            <person name="Whitehead S.L."/>
            <person name="Wilkinson J.E."/>
            <person name="Willey D.L."/>
            <person name="Williams H."/>
            <person name="Wilming L."/>
            <person name="Wray P.W."/>
            <person name="Wu Z."/>
            <person name="Coulson A."/>
            <person name="Vaudin M."/>
            <person name="Sulston J.E."/>
            <person name="Durbin R.M."/>
            <person name="Hubbard T."/>
            <person name="Wooster R."/>
            <person name="Dunham I."/>
            <person name="Carter N.P."/>
            <person name="McVean G."/>
            <person name="Ross M.T."/>
            <person name="Harrow J."/>
            <person name="Olson M.V."/>
            <person name="Beck S."/>
            <person name="Rogers J."/>
            <person name="Bentley D.R."/>
        </authorList>
    </citation>
    <scope>NUCLEOTIDE SEQUENCE [LARGE SCALE GENOMIC DNA]</scope>
</reference>
<reference key="3">
    <citation type="submission" date="2006-12" db="EMBL/GenBank/DDBJ databases">
        <authorList>
            <person name="Mural R.J."/>
            <person name="Istrail S."/>
            <person name="Sutton G.G."/>
            <person name="Florea L."/>
            <person name="Halpern A.L."/>
            <person name="Mobarry C.M."/>
            <person name="Lippert R."/>
            <person name="Walenz B."/>
            <person name="Shatkay H."/>
            <person name="Dew I."/>
            <person name="Miller J.R."/>
            <person name="Flanigan M.J."/>
            <person name="Edwards N.J."/>
            <person name="Bolanos R."/>
            <person name="Fasulo D."/>
            <person name="Halldorsson B.V."/>
            <person name="Hannenhalli S."/>
            <person name="Turner R."/>
            <person name="Yooseph S."/>
            <person name="Lu F."/>
            <person name="Nusskern D.R."/>
            <person name="Shue B.C."/>
            <person name="Zheng X.H."/>
            <person name="Zhong F."/>
            <person name="Delcher A.L."/>
            <person name="Huson D.H."/>
            <person name="Kravitz S.A."/>
            <person name="Mouchard L."/>
            <person name="Reinert K."/>
            <person name="Remington K.A."/>
            <person name="Clark A.G."/>
            <person name="Waterman M.S."/>
            <person name="Eichler E.E."/>
            <person name="Adams M.D."/>
            <person name="Hunkapiller M.W."/>
            <person name="Myers E.W."/>
            <person name="Venter J.C."/>
        </authorList>
    </citation>
    <scope>NUCLEOTIDE SEQUENCE [LARGE SCALE GENOMIC DNA]</scope>
</reference>
<reference key="4">
    <citation type="journal article" date="2004" name="Genome Res.">
        <title>The status, quality, and expansion of the NIH full-length cDNA project: the Mammalian Gene Collection (MGC).</title>
        <authorList>
            <consortium name="The MGC Project Team"/>
        </authorList>
    </citation>
    <scope>NUCLEOTIDE SEQUENCE [LARGE SCALE MRNA] (ISOFORMS 1; 2 AND 3)</scope>
    <scope>VARIANT SER-506</scope>
    <source>
        <tissue>Muscle</tissue>
        <tissue>Uterus</tissue>
    </source>
</reference>
<reference key="5">
    <citation type="journal article" date="2002" name="Genes Dev.">
        <title>SETDB1: a novel KAP-1-associated histone H3, lysine 9-specific methyltransferase that contributes to HP1-mediated silencing of euchromatic genes by KRAB zinc-finger proteins.</title>
        <authorList>
            <person name="Schultz D.C."/>
            <person name="Ayyanathan K."/>
            <person name="Negorev D."/>
            <person name="Maul G.G."/>
            <person name="Rauscher F.J. III"/>
        </authorList>
    </citation>
    <scope>CHARACTERIZATION</scope>
    <scope>MUTAGENESIS OF 729-CYS--CYS-731; HIS-1224; CYS-1226 AND CYS-1279</scope>
    <scope>INTERACTION WITH TRIM28</scope>
</reference>
<reference key="6">
    <citation type="journal article" date="2003" name="Genes Dev.">
        <title>Regulated recruitment of HP1 to a euchromatic gene induces mitotically heritable, epigenetic gene silencing: a mammalian cell culture model of gene variegation.</title>
        <authorList>
            <person name="Ayyanathan K."/>
            <person name="Lechner M.S."/>
            <person name="Bell P."/>
            <person name="Maul G.G."/>
            <person name="Schultz D.C."/>
            <person name="Yamada Y."/>
            <person name="Tanaka K."/>
            <person name="Torigoe K."/>
            <person name="Rauscher F.J. III"/>
        </authorList>
    </citation>
    <scope>FUNCTION</scope>
</reference>
<reference key="7">
    <citation type="journal article" date="2003" name="Mol. Cell">
        <title>mAM facilitates conversion by ESET of dimethyl to trimethyl lysine 9 of histone H3 to cause transcriptional repression.</title>
        <authorList>
            <person name="Wang H."/>
            <person name="An W."/>
            <person name="Cao R."/>
            <person name="Xia L."/>
            <person name="Erdjument-Bromage H."/>
            <person name="Chatton B."/>
            <person name="Tempst P."/>
            <person name="Roeder R.G."/>
            <person name="Zhang Y."/>
        </authorList>
    </citation>
    <scope>IDENTIFICATION BY MASS SPECTROMETRY</scope>
    <scope>FUNCTION</scope>
    <scope>INTERACTION WITH ATF7IP</scope>
    <scope>BIOPHYSICOCHEMICAL PROPERTIES</scope>
    <scope>CATALYTIC ACTIVITY</scope>
</reference>
<reference key="8">
    <citation type="journal article" date="2004" name="Mol. Cell">
        <title>Methyl-CpG binding protein MBD1 couples histone H3 methylation at lysine 9 by SETDB1 to DNA replication and chromatin assembly.</title>
        <authorList>
            <person name="Sarraf S.A."/>
            <person name="Stancheva I."/>
        </authorList>
    </citation>
    <scope>RETRACTED PAPER</scope>
</reference>
<reference key="9">
    <citation type="journal article" date="2019" name="Mol. Cell">
        <title>Retraction Notice to: Methyl-CpG Binding Protein MBD1 Couples Histone H3 Methylation at Lysine 9 by SETDB1 to DNA Replication and Chromatin Assembly.</title>
        <authorList>
            <person name="Sarraf S.A."/>
            <person name="Stancheva I."/>
        </authorList>
    </citation>
    <scope>RETRACTION NOTICE OF PUBMED:15327775</scope>
</reference>
<reference key="10">
    <citation type="journal article" date="2005" name="Mol. Cell. Biol.">
        <title>In vivo HP1 targeting causes large-scale chromatin condensation and enhanced histone lysine methylation.</title>
        <authorList>
            <person name="Verschure P.J."/>
            <person name="van der Kraan I."/>
            <person name="de Leeuw W."/>
            <person name="van der Vlag J."/>
            <person name="Carpenter A.E."/>
            <person name="Belmont A.S."/>
            <person name="van Driel R."/>
        </authorList>
    </citation>
    <scope>INTERACTION WITH CBX1 AND CBX5</scope>
</reference>
<reference key="11">
    <citation type="journal article" date="2006" name="EMBO J.">
        <title>Regulation of MBD1-mediated transcriptional repression by SUMO and PIAS proteins.</title>
        <authorList>
            <person name="Lyst M.J."/>
            <person name="Nan X."/>
            <person name="Stancheva I."/>
        </authorList>
    </citation>
    <scope>RETRACTED PAPER</scope>
</reference>
<reference key="12">
    <citation type="journal article" date="2019" name="EMBO J.">
        <title>Retraction: Regulation of MBD1-mediated transcriptional repression by SUMO and PIAS proteins.</title>
        <authorList>
            <person name="Lyst M.J."/>
            <person name="Nan X."/>
            <person name="Stancheva I."/>
        </authorList>
    </citation>
    <scope>RETRACTION NOTICE OF PUBMED:17066076</scope>
</reference>
<reference key="13">
    <citation type="journal article" date="2005" name="J. Biol. Chem.">
        <title>Transcriptional repression and heterochromatin formation by MBD1 and MCAF/AM family proteins.</title>
        <authorList>
            <person name="Ichimura T."/>
            <person name="Watanabe S."/>
            <person name="Sakamoto Y."/>
            <person name="Aoto T."/>
            <person name="Fujita N."/>
            <person name="Nakao M."/>
        </authorList>
    </citation>
    <scope>INTERACTION WITH ATF7IP AND ATF7IP2</scope>
</reference>
<reference key="14">
    <citation type="journal article" date="2006" name="J. Biol. Chem.">
        <title>The histone methyltransferase SETDB1 and the DNA methyltransferase DNMT3A interact directly and localize to promoters silenced in cancer cells.</title>
        <authorList>
            <person name="Li H."/>
            <person name="Rauch T."/>
            <person name="Chen Z.-X."/>
            <person name="Szabo P.E."/>
            <person name="Riggs A.D."/>
            <person name="Pfeifer G.P."/>
        </authorList>
    </citation>
    <scope>INTERACTION WITH DNMT3A AND DNMT3B</scope>
</reference>
<reference key="15">
    <citation type="journal article" date="2006" name="Proc. Natl. Acad. Sci. U.S.A.">
        <title>NXP-2 association with SUMO-2 depends on lysines required for transcriptional repression.</title>
        <authorList>
            <person name="Rosendorff A."/>
            <person name="Sakakibara S."/>
            <person name="Lu S."/>
            <person name="Kieff E."/>
            <person name="Xuan Y."/>
            <person name="DiBacco A."/>
            <person name="Shi Y."/>
            <person name="Shi Y."/>
            <person name="Gill G."/>
        </authorList>
    </citation>
    <scope>INTERACTION WITH SUMO2</scope>
</reference>
<reference key="16">
    <citation type="journal article" date="2006" name="Proc. Natl. Acad. Sci. U.S.A.">
        <title>ESET/SETDB1 gene expression and histone H3 (K9) trimethylation in Huntington's disease.</title>
        <authorList>
            <person name="Ryu H."/>
            <person name="Lee J."/>
            <person name="Hagerty S.W."/>
            <person name="Soh B.Y."/>
            <person name="McAlpin S.E."/>
            <person name="Cormier K.A."/>
            <person name="Smith K.M."/>
            <person name="Ferrante R.J."/>
        </authorList>
    </citation>
    <scope>EXPRESSION IN HUNTINGTON DISEASE</scope>
</reference>
<reference key="17">
    <citation type="journal article" date="2007" name="Nat. Cell Biol.">
        <title>A histone lysine methyltransferase activated by non-canonical Wnt signalling suppresses PPAR-gamma transactivation.</title>
        <authorList>
            <person name="Takada I."/>
            <person name="Mihara M."/>
            <person name="Suzawa M."/>
            <person name="Ohtake F."/>
            <person name="Kobayashi S."/>
            <person name="Igarashi M."/>
            <person name="Youn M.Y."/>
            <person name="Takeyama K."/>
            <person name="Nakamura T."/>
            <person name="Mezaki Y."/>
            <person name="Takezawa S."/>
            <person name="Yogiashi Y."/>
            <person name="Kitagawa H."/>
            <person name="Yamada G."/>
            <person name="Takada S."/>
            <person name="Minami Y."/>
            <person name="Shibuya H."/>
            <person name="Matsumoto K."/>
            <person name="Kato S."/>
        </authorList>
    </citation>
    <scope>RETRACTED PAPER</scope>
</reference>
<reference key="18">
    <citation type="journal article" date="2014" name="Nat. Cell Biol.">
        <authorList>
            <person name="Takada I."/>
            <person name="Mihara M."/>
            <person name="Suzawa M."/>
            <person name="Ohtake F."/>
            <person name="Kobayashi S."/>
            <person name="Igarashi M."/>
            <person name="Youn M.Y."/>
            <person name="Takeyama K."/>
            <person name="Nakamura T."/>
            <person name="Mezaki Y."/>
            <person name="Takezawa S."/>
            <person name="Yogiashi Y."/>
            <person name="Kitagawa H."/>
            <person name="Yamada G."/>
            <person name="Takada S."/>
            <person name="Minami Y."/>
            <person name="Shibuya H."/>
            <person name="Matsumoto K."/>
            <person name="Kato S."/>
        </authorList>
    </citation>
    <scope>RETRACTION NOTICE OF PUBMED:17952062</scope>
</reference>
<reference key="19">
    <citation type="journal article" date="2008" name="J. Proteome Res.">
        <title>Combining protein-based IMAC, peptide-based IMAC, and MudPIT for efficient phosphoproteomic analysis.</title>
        <authorList>
            <person name="Cantin G.T."/>
            <person name="Yi W."/>
            <person name="Lu B."/>
            <person name="Park S.K."/>
            <person name="Xu T."/>
            <person name="Lee J.-D."/>
            <person name="Yates J.R. III"/>
        </authorList>
    </citation>
    <scope>PHOSPHORYLATION [LARGE SCALE ANALYSIS] AT SER-1066</scope>
    <scope>IDENTIFICATION BY MASS SPECTROMETRY [LARGE SCALE ANALYSIS]</scope>
    <source>
        <tissue>Cervix carcinoma</tissue>
    </source>
</reference>
<reference key="20">
    <citation type="journal article" date="2008" name="Mol. Cell">
        <title>CDYL bridges REST and histone methyltransferases for gene repression and suppression of cellular transformation.</title>
        <authorList>
            <person name="Mulligan P."/>
            <person name="Westbrook T.F."/>
            <person name="Ottinger M."/>
            <person name="Pavlova N."/>
            <person name="Chang B."/>
            <person name="Macia E."/>
            <person name="Shi Y.J."/>
            <person name="Barretina J."/>
            <person name="Liu J."/>
            <person name="Howley P.M."/>
            <person name="Elledge S.J."/>
            <person name="Shi Y."/>
        </authorList>
    </citation>
    <scope>IDENTIFICATION IN A COMPLEX WITH REST; CDYL; WIZ; EHMT1 AND EHMT2</scope>
</reference>
<reference key="21">
    <citation type="journal article" date="2008" name="Proc. Natl. Acad. Sci. U.S.A.">
        <title>A quantitative atlas of mitotic phosphorylation.</title>
        <authorList>
            <person name="Dephoure N."/>
            <person name="Zhou C."/>
            <person name="Villen J."/>
            <person name="Beausoleil S.A."/>
            <person name="Bakalarski C.E."/>
            <person name="Elledge S.J."/>
            <person name="Gygi S.P."/>
        </authorList>
    </citation>
    <scope>PHOSPHORYLATION [LARGE SCALE ANALYSIS] AT SER-1066</scope>
    <scope>IDENTIFICATION BY MASS SPECTROMETRY [LARGE SCALE ANALYSIS]</scope>
    <source>
        <tissue>Cervix carcinoma</tissue>
    </source>
</reference>
<reference key="22">
    <citation type="journal article" date="2010" name="EMBO J.">
        <title>Methyl-H3K9-binding protein MPP8 mediates E-cadherin gene silencing and promotes tumour cell motility and invasion.</title>
        <authorList>
            <person name="Kokura K."/>
            <person name="Sun L."/>
            <person name="Bedford M.T."/>
            <person name="Fang J."/>
        </authorList>
    </citation>
    <scope>INTERACTION WITH MPHOSPH8</scope>
</reference>
<reference key="23">
    <citation type="journal article" date="2011" name="BMC Syst. Biol.">
        <title>Initial characterization of the human central proteome.</title>
        <authorList>
            <person name="Burkard T.R."/>
            <person name="Planyavsky M."/>
            <person name="Kaupe I."/>
            <person name="Breitwieser F.P."/>
            <person name="Buerckstuemmer T."/>
            <person name="Bennett K.L."/>
            <person name="Superti-Furga G."/>
            <person name="Colinge J."/>
        </authorList>
    </citation>
    <scope>IDENTIFICATION BY MASS SPECTROMETRY [LARGE SCALE ANALYSIS]</scope>
</reference>
<reference key="24">
    <citation type="journal article" date="2011" name="Sci. Signal.">
        <title>System-wide temporal characterization of the proteome and phosphoproteome of human embryonic stem cell differentiation.</title>
        <authorList>
            <person name="Rigbolt K.T."/>
            <person name="Prokhorova T.A."/>
            <person name="Akimov V."/>
            <person name="Henningsen J."/>
            <person name="Johansen P.T."/>
            <person name="Kratchmarova I."/>
            <person name="Kassem M."/>
            <person name="Mann M."/>
            <person name="Olsen J.V."/>
            <person name="Blagoev B."/>
        </authorList>
    </citation>
    <scope>PHOSPHORYLATION [LARGE SCALE ANALYSIS] AT SER-1066</scope>
    <scope>IDENTIFICATION BY MASS SPECTROMETRY [LARGE SCALE ANALYSIS]</scope>
</reference>
<reference key="25">
    <citation type="journal article" date="2012" name="Cell">
        <title>Prdm3 and Prdm16 are H3K9me1 methyltransferases required for mammalian heterochromatin integrity.</title>
        <authorList>
            <person name="Pinheiro I."/>
            <person name="Margueron R."/>
            <person name="Shukeir N."/>
            <person name="Eisold M."/>
            <person name="Fritzsch C."/>
            <person name="Richter F.M."/>
            <person name="Mittler G."/>
            <person name="Genoud C."/>
            <person name="Goyama S."/>
            <person name="Kurokawa M."/>
            <person name="Son J."/>
            <person name="Reinberg D."/>
            <person name="Lachner M."/>
            <person name="Jenuwein T."/>
        </authorList>
    </citation>
    <scope>IDENTIFICATION BY MASS SPECTROMETRY</scope>
</reference>
<reference key="26">
    <citation type="journal article" date="2012" name="Nucleic Acids Res.">
        <title>SPOC1 modulates DNA repair by regulating key determinants of chromatin compaction and DNA damage response.</title>
        <authorList>
            <person name="Mund A."/>
            <person name="Schubert T."/>
            <person name="Staege H."/>
            <person name="Kinkley S."/>
            <person name="Reumann K."/>
            <person name="Kriegs M."/>
            <person name="Fritsch L."/>
            <person name="Battisti V."/>
            <person name="Ait-Si-Ali S."/>
            <person name="Hoffbeck A.S."/>
            <person name="Soutoglou E."/>
            <person name="Will H."/>
        </authorList>
    </citation>
    <scope>INTERACTION WITH PHF13</scope>
</reference>
<reference key="27">
    <citation type="journal article" date="2020" name="Nucleic Acids Res.">
        <title>SPOC1 modulates DNA repair by regulating key determinants of chromatin compaction and DNA damage response.</title>
        <authorList>
            <person name="Mund A."/>
            <person name="Schubert T."/>
            <person name="Staege H."/>
            <person name="Kinkley S."/>
            <person name="Reumann K."/>
            <person name="Kriegs M."/>
            <person name="Fritsch L."/>
            <person name="Battisti V."/>
            <person name="Ait-Si-Ali S."/>
            <person name="Hoffbeck A.S."/>
            <person name="Soutoglou E."/>
            <person name="Will H."/>
        </authorList>
    </citation>
    <scope>ERRATUM OF PUBMED:23034801</scope>
</reference>
<reference key="28">
    <citation type="journal article" date="2013" name="J. Proteome Res.">
        <title>Toward a comprehensive characterization of a human cancer cell phosphoproteome.</title>
        <authorList>
            <person name="Zhou H."/>
            <person name="Di Palma S."/>
            <person name="Preisinger C."/>
            <person name="Peng M."/>
            <person name="Polat A.N."/>
            <person name="Heck A.J."/>
            <person name="Mohammed S."/>
        </authorList>
    </citation>
    <scope>PHOSPHORYLATION [LARGE SCALE ANALYSIS] AT SER-1025 AND SER-1066</scope>
    <scope>IDENTIFICATION BY MASS SPECTROMETRY [LARGE SCALE ANALYSIS]</scope>
    <source>
        <tissue>Cervix carcinoma</tissue>
        <tissue>Erythroleukemia</tissue>
    </source>
</reference>
<reference key="29">
    <citation type="journal article" date="2014" name="Elife">
        <title>A KRAS-directed transcriptional silencing pathway that mediates the CpG island methylator phenotype.</title>
        <authorList>
            <person name="Serra R.W."/>
            <person name="Fang M."/>
            <person name="Park S.M."/>
            <person name="Hutchinson L."/>
            <person name="Green M.R."/>
        </authorList>
    </citation>
    <scope>FUNCTION</scope>
    <scope>POSSIBLE IDENTIFICATION IN A COREPRESSOR COMPLEX</scope>
    <scope>CHROMATIN-BINDING</scope>
</reference>
<reference key="30">
    <citation type="journal article" date="2014" name="J. Proteomics">
        <title>An enzyme assisted RP-RPLC approach for in-depth analysis of human liver phosphoproteome.</title>
        <authorList>
            <person name="Bian Y."/>
            <person name="Song C."/>
            <person name="Cheng K."/>
            <person name="Dong M."/>
            <person name="Wang F."/>
            <person name="Huang J."/>
            <person name="Sun D."/>
            <person name="Wang L."/>
            <person name="Ye M."/>
            <person name="Zou H."/>
        </authorList>
    </citation>
    <scope>IDENTIFICATION BY MASS SPECTROMETRY [LARGE SCALE ANALYSIS]</scope>
    <source>
        <tissue>Liver</tissue>
    </source>
</reference>
<reference key="31">
    <citation type="journal article" date="2014" name="Mol. Cell. Proteomics">
        <title>Immunoaffinity enrichment and mass spectrometry analysis of protein methylation.</title>
        <authorList>
            <person name="Guo A."/>
            <person name="Gu H."/>
            <person name="Zhou J."/>
            <person name="Mulhern D."/>
            <person name="Wang Y."/>
            <person name="Lee K.A."/>
            <person name="Yang V."/>
            <person name="Aguiar M."/>
            <person name="Kornhauser J."/>
            <person name="Jia X."/>
            <person name="Ren J."/>
            <person name="Beausoleil S.A."/>
            <person name="Silva J.C."/>
            <person name="Vemulapalli V."/>
            <person name="Bedford M.T."/>
            <person name="Comb M.J."/>
        </authorList>
    </citation>
    <scope>METHYLATION [LARGE SCALE ANALYSIS] AT LYS-1170 AND LYS-1178</scope>
    <scope>IDENTIFICATION BY MASS SPECTROMETRY [LARGE SCALE ANALYSIS]</scope>
    <source>
        <tissue>Colon carcinoma</tissue>
    </source>
</reference>
<reference key="32">
    <citation type="journal article" date="2014" name="Nat. Struct. Mol. Biol.">
        <title>Uncovering global SUMOylation signaling networks in a site-specific manner.</title>
        <authorList>
            <person name="Hendriks I.A."/>
            <person name="D'Souza R.C."/>
            <person name="Yang B."/>
            <person name="Verlaan-de Vries M."/>
            <person name="Mann M."/>
            <person name="Vertegaal A.C."/>
        </authorList>
    </citation>
    <scope>SUMOYLATION [LARGE SCALE ANALYSIS] AT LYS-1032 AND LYS-1069</scope>
    <scope>IDENTIFICATION BY MASS SPECTROMETRY [LARGE SCALE ANALYSIS]</scope>
</reference>
<reference key="33">
    <citation type="journal article" date="2014" name="Proc. Natl. Acad. Sci. U.S.A.">
        <title>Mapping of SUMO sites and analysis of SUMOylation changes induced by external stimuli.</title>
        <authorList>
            <person name="Impens F."/>
            <person name="Radoshevich L."/>
            <person name="Cossart P."/>
            <person name="Ribet D."/>
        </authorList>
    </citation>
    <scope>SUMOYLATION [LARGE SCALE ANALYSIS] AT LYS-1032</scope>
    <scope>IDENTIFICATION BY MASS SPECTROMETRY [LARGE SCALE ANALYSIS]</scope>
</reference>
<reference key="34">
    <citation type="journal article" date="2015" name="Cell Rep.">
        <title>SUMO-2 orchestrates chromatin modifiers in response to DNA damage.</title>
        <authorList>
            <person name="Hendriks I.A."/>
            <person name="Treffers L.W."/>
            <person name="Verlaan-de Vries M."/>
            <person name="Olsen J.V."/>
            <person name="Vertegaal A.C."/>
        </authorList>
    </citation>
    <scope>SUMOYLATION [LARGE SCALE ANALYSIS] AT LYS-1032 AND LYS-1069</scope>
    <scope>IDENTIFICATION BY MASS SPECTROMETRY [LARGE SCALE ANALYSIS]</scope>
</reference>
<reference key="35">
    <citation type="journal article" date="2015" name="Mol. Cell. Proteomics">
        <title>System-wide analysis of SUMOylation dynamics in response to replication stress reveals novel small ubiquitin-like modified target proteins and acceptor lysines relevant for genome stability.</title>
        <authorList>
            <person name="Xiao Z."/>
            <person name="Chang J.G."/>
            <person name="Hendriks I.A."/>
            <person name="Sigurdsson J.O."/>
            <person name="Olsen J.V."/>
            <person name="Vertegaal A.C."/>
        </authorList>
    </citation>
    <scope>SUMOYLATION [LARGE SCALE ANALYSIS] AT LYS-1032 AND LYS-1069</scope>
    <scope>IDENTIFICATION BY MASS SPECTROMETRY [LARGE SCALE ANALYSIS]</scope>
</reference>
<reference key="36">
    <citation type="journal article" date="2016" name="Epigenetics">
        <title>ATRX binds to atypical chromatin domains at the 3' exons of zinc finger genes to preserve H3K9me3 enrichment.</title>
        <authorList>
            <person name="Valle-Garcia D."/>
            <person name="Qadeer Z.A."/>
            <person name="McHugh D.S."/>
            <person name="Ghiraldini F.G."/>
            <person name="Chowdhury A.H."/>
            <person name="Hasson D."/>
            <person name="Dyer M.A."/>
            <person name="Recillas-Targa F."/>
            <person name="Bernstein E."/>
        </authorList>
    </citation>
    <scope>FUNCTION</scope>
    <scope>INTERACTION WITH ATRX</scope>
    <scope>FORMATION OF A COMPLEX WITH ATRX; TRIM28 AND ZNF274</scope>
</reference>
<reference key="37">
    <citation type="journal article" date="2016" name="Cell Rep.">
        <title>ATF7IP-Mediated Stabilization of the Histone Methyltransferase SETDB1 Is Essential for Heterochromatin Formation by the HUSH Complex.</title>
        <authorList>
            <person name="Timms R.T."/>
            <person name="Tchasovnikarova I.A."/>
            <person name="Antrobus R."/>
            <person name="Dougan G."/>
            <person name="Lehner P.J."/>
        </authorList>
    </citation>
    <scope>FUNCTION</scope>
    <scope>INTERACTION WITH ATF7IP</scope>
    <scope>DEGRADATION</scope>
    <scope>SUBCELLULAR LOCATION</scope>
</reference>
<reference key="38">
    <citation type="journal article" date="2016" name="Mol. Cell">
        <title>E3-Independent Constitutive Monoubiquitination Complements Histone Methyltransferase Activity of SETDB1.</title>
        <authorList>
            <person name="Sun L."/>
            <person name="Fang J."/>
        </authorList>
    </citation>
    <scope>FUNCTION</scope>
    <scope>UBIQUITINATION AT LYS-867</scope>
    <scope>MUTAGENESIS OF PHE-866; LYS-867 AND GLU-868</scope>
</reference>
<reference key="39">
    <citation type="journal article" date="2017" name="Nat. Struct. Mol. Biol.">
        <title>Site-specific mapping of the human SUMO proteome reveals co-modification with phosphorylation.</title>
        <authorList>
            <person name="Hendriks I.A."/>
            <person name="Lyon D."/>
            <person name="Young C."/>
            <person name="Jensen L.J."/>
            <person name="Vertegaal A.C."/>
            <person name="Nielsen M.L."/>
        </authorList>
    </citation>
    <scope>SUMOYLATION [LARGE SCALE ANALYSIS] AT LYS-182; LYS-1032; LYS-1038; LYS-1069 AND LYS-1149</scope>
    <scope>IDENTIFICATION BY MASS SPECTROMETRY [LARGE SCALE ANALYSIS]</scope>
</reference>
<reference key="40">
    <citation type="journal article" date="2018" name="Nature">
        <title>NP220 mediates silencing of unintegrated retroviral DNA.</title>
        <authorList>
            <person name="Zhu Y."/>
            <person name="Wang G.Z."/>
            <person name="Cingoez O."/>
            <person name="Goff S.P."/>
        </authorList>
    </citation>
    <scope>INTERACTION WITH ZNF638</scope>
</reference>
<reference key="41">
    <citation type="journal article" date="2020" name="Oncogene">
        <title>The EGFR-ZNF263 signaling axis silences SIX3 in glioblastoma epigenetically.</title>
        <authorList>
            <person name="Yu Z."/>
            <person name="Feng J."/>
            <person name="Wang W."/>
            <person name="Deng Z."/>
            <person name="Zhang Y."/>
            <person name="Xiao L."/>
            <person name="Wang Z."/>
            <person name="Liu C."/>
            <person name="Liu Q."/>
            <person name="Chen S."/>
            <person name="Wu M."/>
        </authorList>
    </citation>
    <scope>INTERACTION WITH ZNF263</scope>
</reference>
<reference key="42">
    <citation type="journal article" date="2023" name="Epigenetics Chromatin">
        <title>The pattern of histone H3 epigenetic posttranslational modifications is regulated by the VRK1 chromatin kinase.</title>
        <authorList>
            <person name="Monte-Serrano E."/>
            <person name="Morejon-Garcia P."/>
            <person name="Campillo-Marcos I."/>
            <person name="Campos-Diaz A."/>
            <person name="Navarro-Carrasco E."/>
            <person name="Lazo P.A."/>
        </authorList>
    </citation>
    <scope>INTERACTION WITH VRK1</scope>
</reference>
<reference key="43">
    <citation type="journal article" date="2024" name="Cell Rep.">
        <title>SETDB1 suppresses NK cell-mediated immunosurveillance in acute myeloid leukemia with granulo-monocytic differentiation.</title>
        <authorList>
            <person name="Chang Y.H."/>
            <person name="Yamamoto K."/>
            <person name="Fujino T."/>
            <person name="Wang T.W."/>
            <person name="Sugimoto E."/>
            <person name="Zhang W."/>
            <person name="Yabushita T."/>
            <person name="Suzaki K."/>
            <person name="Pietsch E.C."/>
            <person name="Weir B.A."/>
            <person name="Crescenzo R."/>
            <person name="Cowley G.S."/>
            <person name="Attar R."/>
            <person name="Philippar U."/>
            <person name="Wunderlich M."/>
            <person name="Mizukawa B."/>
            <person name="Zheng Y."/>
            <person name="Enomoto Y."/>
            <person name="Imai Y."/>
            <person name="Kitamura T."/>
            <person name="Goyama S."/>
        </authorList>
    </citation>
    <scope>FUNCTION</scope>
    <scope>MUTAGENESIS OF LYS-867 AND CYS-1226</scope>
</reference>
<reference key="44">
    <citation type="submission" date="2009-02" db="PDB data bank">
        <title>The crystal structure of Tudor domain of human histone-lysine N-methyltransferase SETDB1.</title>
        <authorList>
            <consortium name="Structural genomics consortium (SGC)"/>
        </authorList>
    </citation>
    <scope>X-RAY CRYSTALLOGRAPHY (1.77 ANGSTROMS) OF 196-402</scope>
</reference>